<sequence>MADEEKLPPGWEKRMSRSSGRVYYFNHITNASQWERPSGNSSSGGKNGQGEPARVRCSHLLVKHSQSRRPSSWRQEKITRTKEEALELINGYIQKIKSGEEDFESLASQFSDCSSAKARGDLGAFSRGQMQKPFEDASFALRTGEMSGPVFTDSGIHIILRTE</sequence>
<feature type="chain" id="PRO_0000193435" description="Peptidyl-prolyl cis-trans isomerase NIMA-interacting 1">
    <location>
        <begin position="1"/>
        <end position="163"/>
    </location>
</feature>
<feature type="domain" description="WW" evidence="2">
    <location>
        <begin position="5"/>
        <end position="39"/>
    </location>
</feature>
<feature type="domain" description="PpiC" evidence="3">
    <location>
        <begin position="52"/>
        <end position="163"/>
    </location>
</feature>
<feature type="region of interest" description="Disordered" evidence="4">
    <location>
        <begin position="33"/>
        <end position="54"/>
    </location>
</feature>
<feature type="modified residue" description="Phosphoserine" evidence="21">
    <location>
        <position position="43"/>
    </location>
</feature>
<feature type="modified residue" description="N6-acetyllysine" evidence="20">
    <location>
        <position position="46"/>
    </location>
</feature>
<feature type="modified residue" description="Phosphoserine; by DAPK1" evidence="12 18">
    <location>
        <position position="71"/>
    </location>
</feature>
<feature type="modified residue" description="Phosphoserine" evidence="19">
    <location>
        <position position="108"/>
    </location>
</feature>
<feature type="mutagenesis site" description="Reduced affinity for KIF20B." evidence="5">
    <original>Y</original>
    <variation>A</variation>
    <location>
        <position position="23"/>
    </location>
</feature>
<feature type="mutagenesis site" description="Loss of binding to phosphorylated target proteins, including to phosphorylated RBBP8/CtIP; decrease in DNA repair of double-strand breaks by homologous recombination less efficient than that observed with wild-type protein. Abolishes interaction with IRAK3/IRAK-M. Abolishes IL33-mediated increase of IRAK3/IRAK-M protein levels." evidence="14 15 18">
    <original>W</original>
    <variation>A</variation>
    <location>
        <position position="34"/>
    </location>
</feature>
<feature type="mutagenesis site" description="Loss of peptidyl-prolyl cis/trans isomerase activity. No effect on the interaction with IRAK3/IRAK-M. Abolishes IL33-mediated increase of IRAK3/IRAK-M protein levels." evidence="14 18">
    <original>K</original>
    <variation>A</variation>
    <location>
        <position position="63"/>
    </location>
</feature>
<feature type="mutagenesis site" description="Loss of peptidyl-prolyl cis/trans isomerase activity, nuclear localization and cellular function." evidence="12">
    <original>S</original>
    <variation>D</variation>
    <variation>E</variation>
    <location>
        <position position="71"/>
    </location>
</feature>
<feature type="mutagenesis site" description="Loss of peptidyl-prolyl cis/trans isomerase activity; decrease in DNA repair of double-strand breaks by homologous recombination slightly less efficient than that observed with wild-type protein. No effect on RBBP8/CtIP." evidence="15 16">
    <original>C</original>
    <variation>A</variation>
    <location>
        <position position="113"/>
    </location>
</feature>
<feature type="strand" evidence="27">
    <location>
        <begin position="3"/>
        <end position="7"/>
    </location>
</feature>
<feature type="strand" evidence="23">
    <location>
        <begin position="11"/>
        <end position="15"/>
    </location>
</feature>
<feature type="turn" evidence="26">
    <location>
        <begin position="17"/>
        <end position="19"/>
    </location>
</feature>
<feature type="strand" evidence="23">
    <location>
        <begin position="22"/>
        <end position="26"/>
    </location>
</feature>
<feature type="turn" evidence="23">
    <location>
        <begin position="27"/>
        <end position="29"/>
    </location>
</feature>
<feature type="strand" evidence="23">
    <location>
        <begin position="32"/>
        <end position="35"/>
    </location>
</feature>
<feature type="strand" evidence="22">
    <location>
        <begin position="39"/>
        <end position="41"/>
    </location>
</feature>
<feature type="strand" evidence="28">
    <location>
        <begin position="44"/>
        <end position="47"/>
    </location>
</feature>
<feature type="strand" evidence="25">
    <location>
        <begin position="53"/>
        <end position="62"/>
    </location>
</feature>
<feature type="strand" evidence="25">
    <location>
        <begin position="67"/>
        <end position="69"/>
    </location>
</feature>
<feature type="strand" evidence="25">
    <location>
        <begin position="75"/>
        <end position="77"/>
    </location>
</feature>
<feature type="helix" evidence="25">
    <location>
        <begin position="82"/>
        <end position="98"/>
    </location>
</feature>
<feature type="strand" evidence="25">
    <location>
        <begin position="99"/>
        <end position="101"/>
    </location>
</feature>
<feature type="helix" evidence="25">
    <location>
        <begin position="103"/>
        <end position="110"/>
    </location>
</feature>
<feature type="helix" evidence="25">
    <location>
        <begin position="114"/>
        <end position="118"/>
    </location>
</feature>
<feature type="strand" evidence="25">
    <location>
        <begin position="121"/>
        <end position="126"/>
    </location>
</feature>
<feature type="helix" evidence="24">
    <location>
        <begin position="127"/>
        <end position="129"/>
    </location>
</feature>
<feature type="helix" evidence="25">
    <location>
        <begin position="132"/>
        <end position="140"/>
    </location>
</feature>
<feature type="strand" evidence="28">
    <location>
        <begin position="141"/>
        <end position="145"/>
    </location>
</feature>
<feature type="strand" evidence="25">
    <location>
        <begin position="150"/>
        <end position="152"/>
    </location>
</feature>
<feature type="strand" evidence="25">
    <location>
        <begin position="155"/>
        <end position="163"/>
    </location>
</feature>
<gene>
    <name type="primary">PIN1</name>
</gene>
<protein>
    <recommendedName>
        <fullName>Peptidyl-prolyl cis-trans isomerase NIMA-interacting 1</fullName>
        <ecNumber evidence="12 15 18">5.2.1.8</ecNumber>
    </recommendedName>
    <alternativeName>
        <fullName>Peptidyl-prolyl cis-trans isomerase Pin1</fullName>
        <shortName>PPIase Pin1</shortName>
    </alternativeName>
    <alternativeName>
        <fullName>Rotamase Pin1</fullName>
    </alternativeName>
</protein>
<proteinExistence type="evidence at protein level"/>
<reference key="1">
    <citation type="journal article" date="1996" name="Nature">
        <title>A human peptidyl-prolyl isomerase essential for regulation of mitosis.</title>
        <authorList>
            <person name="Lu K.P."/>
            <person name="Hanes S.D."/>
            <person name="Hunter T."/>
        </authorList>
    </citation>
    <scope>NUCLEOTIDE SEQUENCE [MRNA]</scope>
</reference>
<reference key="2">
    <citation type="submission" date="2004-05" db="EMBL/GenBank/DDBJ databases">
        <title>Cloning of human full open reading frames in Gateway(TM) system entry vector (pDONR201).</title>
        <authorList>
            <person name="Ebert L."/>
            <person name="Schick M."/>
            <person name="Neubert P."/>
            <person name="Schatten R."/>
            <person name="Henze S."/>
            <person name="Korn B."/>
        </authorList>
    </citation>
    <scope>NUCLEOTIDE SEQUENCE [LARGE SCALE MRNA]</scope>
</reference>
<reference key="3">
    <citation type="submission" date="2004-10" db="EMBL/GenBank/DDBJ databases">
        <title>Cloning of human full-length CDSs in BD Creator(TM) system donor vector.</title>
        <authorList>
            <person name="Kalnine N."/>
            <person name="Chen X."/>
            <person name="Rolfs A."/>
            <person name="Halleck A."/>
            <person name="Hines L."/>
            <person name="Eisenstein S."/>
            <person name="Koundinya M."/>
            <person name="Raphael J."/>
            <person name="Moreira D."/>
            <person name="Kelley T."/>
            <person name="LaBaer J."/>
            <person name="Lin Y."/>
            <person name="Phelan M."/>
            <person name="Farmer A."/>
        </authorList>
    </citation>
    <scope>NUCLEOTIDE SEQUENCE [LARGE SCALE MRNA]</scope>
</reference>
<reference key="4">
    <citation type="journal article" date="2004" name="Nat. Genet.">
        <title>Complete sequencing and characterization of 21,243 full-length human cDNAs.</title>
        <authorList>
            <person name="Ota T."/>
            <person name="Suzuki Y."/>
            <person name="Nishikawa T."/>
            <person name="Otsuki T."/>
            <person name="Sugiyama T."/>
            <person name="Irie R."/>
            <person name="Wakamatsu A."/>
            <person name="Hayashi K."/>
            <person name="Sato H."/>
            <person name="Nagai K."/>
            <person name="Kimura K."/>
            <person name="Makita H."/>
            <person name="Sekine M."/>
            <person name="Obayashi M."/>
            <person name="Nishi T."/>
            <person name="Shibahara T."/>
            <person name="Tanaka T."/>
            <person name="Ishii S."/>
            <person name="Yamamoto J."/>
            <person name="Saito K."/>
            <person name="Kawai Y."/>
            <person name="Isono Y."/>
            <person name="Nakamura Y."/>
            <person name="Nagahari K."/>
            <person name="Murakami K."/>
            <person name="Yasuda T."/>
            <person name="Iwayanagi T."/>
            <person name="Wagatsuma M."/>
            <person name="Shiratori A."/>
            <person name="Sudo H."/>
            <person name="Hosoiri T."/>
            <person name="Kaku Y."/>
            <person name="Kodaira H."/>
            <person name="Kondo H."/>
            <person name="Sugawara M."/>
            <person name="Takahashi M."/>
            <person name="Kanda K."/>
            <person name="Yokoi T."/>
            <person name="Furuya T."/>
            <person name="Kikkawa E."/>
            <person name="Omura Y."/>
            <person name="Abe K."/>
            <person name="Kamihara K."/>
            <person name="Katsuta N."/>
            <person name="Sato K."/>
            <person name="Tanikawa M."/>
            <person name="Yamazaki M."/>
            <person name="Ninomiya K."/>
            <person name="Ishibashi T."/>
            <person name="Yamashita H."/>
            <person name="Murakawa K."/>
            <person name="Fujimori K."/>
            <person name="Tanai H."/>
            <person name="Kimata M."/>
            <person name="Watanabe M."/>
            <person name="Hiraoka S."/>
            <person name="Chiba Y."/>
            <person name="Ishida S."/>
            <person name="Ono Y."/>
            <person name="Takiguchi S."/>
            <person name="Watanabe S."/>
            <person name="Yosida M."/>
            <person name="Hotuta T."/>
            <person name="Kusano J."/>
            <person name="Kanehori K."/>
            <person name="Takahashi-Fujii A."/>
            <person name="Hara H."/>
            <person name="Tanase T.-O."/>
            <person name="Nomura Y."/>
            <person name="Togiya S."/>
            <person name="Komai F."/>
            <person name="Hara R."/>
            <person name="Takeuchi K."/>
            <person name="Arita M."/>
            <person name="Imose N."/>
            <person name="Musashino K."/>
            <person name="Yuuki H."/>
            <person name="Oshima A."/>
            <person name="Sasaki N."/>
            <person name="Aotsuka S."/>
            <person name="Yoshikawa Y."/>
            <person name="Matsunawa H."/>
            <person name="Ichihara T."/>
            <person name="Shiohata N."/>
            <person name="Sano S."/>
            <person name="Moriya S."/>
            <person name="Momiyama H."/>
            <person name="Satoh N."/>
            <person name="Takami S."/>
            <person name="Terashima Y."/>
            <person name="Suzuki O."/>
            <person name="Nakagawa S."/>
            <person name="Senoh A."/>
            <person name="Mizoguchi H."/>
            <person name="Goto Y."/>
            <person name="Shimizu F."/>
            <person name="Wakebe H."/>
            <person name="Hishigaki H."/>
            <person name="Watanabe T."/>
            <person name="Sugiyama A."/>
            <person name="Takemoto M."/>
            <person name="Kawakami B."/>
            <person name="Yamazaki M."/>
            <person name="Watanabe K."/>
            <person name="Kumagai A."/>
            <person name="Itakura S."/>
            <person name="Fukuzumi Y."/>
            <person name="Fujimori Y."/>
            <person name="Komiyama M."/>
            <person name="Tashiro H."/>
            <person name="Tanigami A."/>
            <person name="Fujiwara T."/>
            <person name="Ono T."/>
            <person name="Yamada K."/>
            <person name="Fujii Y."/>
            <person name="Ozaki K."/>
            <person name="Hirao M."/>
            <person name="Ohmori Y."/>
            <person name="Kawabata A."/>
            <person name="Hikiji T."/>
            <person name="Kobatake N."/>
            <person name="Inagaki H."/>
            <person name="Ikema Y."/>
            <person name="Okamoto S."/>
            <person name="Okitani R."/>
            <person name="Kawakami T."/>
            <person name="Noguchi S."/>
            <person name="Itoh T."/>
            <person name="Shigeta K."/>
            <person name="Senba T."/>
            <person name="Matsumura K."/>
            <person name="Nakajima Y."/>
            <person name="Mizuno T."/>
            <person name="Morinaga M."/>
            <person name="Sasaki M."/>
            <person name="Togashi T."/>
            <person name="Oyama M."/>
            <person name="Hata H."/>
            <person name="Watanabe M."/>
            <person name="Komatsu T."/>
            <person name="Mizushima-Sugano J."/>
            <person name="Satoh T."/>
            <person name="Shirai Y."/>
            <person name="Takahashi Y."/>
            <person name="Nakagawa K."/>
            <person name="Okumura K."/>
            <person name="Nagase T."/>
            <person name="Nomura N."/>
            <person name="Kikuchi H."/>
            <person name="Masuho Y."/>
            <person name="Yamashita R."/>
            <person name="Nakai K."/>
            <person name="Yada T."/>
            <person name="Nakamura Y."/>
            <person name="Ohara O."/>
            <person name="Isogai T."/>
            <person name="Sugano S."/>
        </authorList>
    </citation>
    <scope>NUCLEOTIDE SEQUENCE [LARGE SCALE MRNA]</scope>
</reference>
<reference key="5">
    <citation type="submission" date="2005-07" db="EMBL/GenBank/DDBJ databases">
        <authorList>
            <person name="Mural R.J."/>
            <person name="Istrail S."/>
            <person name="Sutton G.G."/>
            <person name="Florea L."/>
            <person name="Halpern A.L."/>
            <person name="Mobarry C.M."/>
            <person name="Lippert R."/>
            <person name="Walenz B."/>
            <person name="Shatkay H."/>
            <person name="Dew I."/>
            <person name="Miller J.R."/>
            <person name="Flanigan M.J."/>
            <person name="Edwards N.J."/>
            <person name="Bolanos R."/>
            <person name="Fasulo D."/>
            <person name="Halldorsson B.V."/>
            <person name="Hannenhalli S."/>
            <person name="Turner R."/>
            <person name="Yooseph S."/>
            <person name="Lu F."/>
            <person name="Nusskern D.R."/>
            <person name="Shue B.C."/>
            <person name="Zheng X.H."/>
            <person name="Zhong F."/>
            <person name="Delcher A.L."/>
            <person name="Huson D.H."/>
            <person name="Kravitz S.A."/>
            <person name="Mouchard L."/>
            <person name="Reinert K."/>
            <person name="Remington K.A."/>
            <person name="Clark A.G."/>
            <person name="Waterman M.S."/>
            <person name="Eichler E.E."/>
            <person name="Adams M.D."/>
            <person name="Hunkapiller M.W."/>
            <person name="Myers E.W."/>
            <person name="Venter J.C."/>
        </authorList>
    </citation>
    <scope>NUCLEOTIDE SEQUENCE [LARGE SCALE GENOMIC DNA]</scope>
</reference>
<reference key="6">
    <citation type="journal article" date="2004" name="Genome Res.">
        <title>The status, quality, and expansion of the NIH full-length cDNA project: the Mammalian Gene Collection (MGC).</title>
        <authorList>
            <consortium name="The MGC Project Team"/>
        </authorList>
    </citation>
    <scope>NUCLEOTIDE SEQUENCE [LARGE SCALE MRNA]</scope>
    <source>
        <tissue>Lung</tissue>
    </source>
</reference>
<reference key="7">
    <citation type="journal article" date="2001" name="J. Biol. Chem.">
        <title>Identification of a novel kinesin-related protein, KRMP1, as a target for mitotic peptidyl-prolyl isomerase Pin1.</title>
        <authorList>
            <person name="Kamimoto T."/>
            <person name="Zama T."/>
            <person name="Aoki R."/>
            <person name="Muro Y."/>
            <person name="Hagiwara M."/>
        </authorList>
    </citation>
    <scope>INTERACTION WITH KIF20B</scope>
    <scope>MUTAGENESIS OF TYR-23</scope>
</reference>
<reference key="8">
    <citation type="journal article" date="2005" name="Mol. Cell">
        <title>Regulation of Raf-1 by direct feedback phosphorylation.</title>
        <authorList>
            <person name="Dougherty M.K."/>
            <person name="Muller J."/>
            <person name="Ritt D.A."/>
            <person name="Zhou M."/>
            <person name="Zhou X.Z."/>
            <person name="Copeland T.D."/>
            <person name="Conrads T.P."/>
            <person name="Veenstra T.D."/>
            <person name="Lu K.P."/>
            <person name="Morrison D.K."/>
        </authorList>
    </citation>
    <scope>FUNCTION</scope>
    <scope>INTERACTION WITH RAF1</scope>
</reference>
<reference key="9">
    <citation type="journal article" date="2006" name="Biochem. Biophys. Res. Commun.">
        <title>Interaction of Pin1 with Nek6 and characterization of their expression correlation in Chinese hepatocellular carcinoma patients.</title>
        <authorList>
            <person name="Chen J."/>
            <person name="Li L."/>
            <person name="Zhang Y."/>
            <person name="Yang H."/>
            <person name="Wei Y."/>
            <person name="Zhang L."/>
            <person name="Liu X."/>
            <person name="Yu L."/>
        </authorList>
    </citation>
    <scope>SUBCELLULAR LOCATION</scope>
    <scope>INTERACTION WITH NEK6</scope>
</reference>
<reference key="10">
    <citation type="journal article" date="2006" name="J. Biol. Chem.">
        <title>Regulation of Bruton tyrosine kinase by the peptidylprolyl isomerase Pin1.</title>
        <authorList>
            <person name="Yu L."/>
            <person name="Mohamed A.J."/>
            <person name="Vargas L."/>
            <person name="Berglof A."/>
            <person name="Finn G."/>
            <person name="Lu K.P."/>
            <person name="Smith C.I."/>
        </authorList>
    </citation>
    <scope>INTERACTION WITH BTK</scope>
    <scope>FUNCTION</scope>
</reference>
<reference key="11">
    <citation type="journal article" date="2007" name="Nat. Immunol.">
        <title>Genotoxic stress regulates expression of the proto-oncogene Bcl6 in germinal center B cells.</title>
        <authorList>
            <person name="Phan R.T."/>
            <person name="Saito M."/>
            <person name="Kitagawa Y."/>
            <person name="Means A.R."/>
            <person name="Dalla-Favera R."/>
        </authorList>
    </citation>
    <scope>FUNCTION IN BCL6 STABILITY REGULATION</scope>
    <scope>INTERACTION WITH BCL6</scope>
    <scope>TISSUE SPECIFICITY</scope>
</reference>
<reference key="12">
    <citation type="journal article" date="2007" name="Science">
        <title>ATM and ATR substrate analysis reveals extensive protein networks responsive to DNA damage.</title>
        <authorList>
            <person name="Matsuoka S."/>
            <person name="Ballif B.A."/>
            <person name="Smogorzewska A."/>
            <person name="McDonald E.R. III"/>
            <person name="Hurov K.E."/>
            <person name="Luo J."/>
            <person name="Bakalarski C.E."/>
            <person name="Zhao Z."/>
            <person name="Solimini N."/>
            <person name="Lerenthal Y."/>
            <person name="Shiloh Y."/>
            <person name="Gygi S.P."/>
            <person name="Elledge S.J."/>
        </authorList>
    </citation>
    <scope>PHOSPHORYLATION [LARGE SCALE ANALYSIS] AT SER-108</scope>
    <scope>IDENTIFICATION BY MASS SPECTROMETRY [LARGE SCALE ANALYSIS]</scope>
    <source>
        <tissue>Embryonic kidney</tissue>
    </source>
</reference>
<reference key="13">
    <citation type="journal article" date="2008" name="PLoS ONE">
        <title>Nerve growth factor stimulates interaction of Cayman ataxia protein BNIP-H/Caytaxin with peptidyl-prolyl isomerase Pin1 in differentiating neurons.</title>
        <authorList>
            <person name="Buschdorf J.P."/>
            <person name="Chew L.L."/>
            <person name="Soh U.J."/>
            <person name="Liou Y.C."/>
            <person name="Low B.C."/>
        </authorList>
    </citation>
    <scope>INTERACTION WITH ATCAY</scope>
</reference>
<reference key="14">
    <citation type="journal article" date="2009" name="Kidney Int.">
        <title>Protein kinase-X interacts with Pin-1 and Polycystin-1 during mouse kidney development.</title>
        <authorList>
            <person name="Li X."/>
            <person name="Hyink D.P."/>
            <person name="Radbill B."/>
            <person name="Sudol M."/>
            <person name="Zhang H."/>
            <person name="Zheleznova N.N."/>
            <person name="Wilson P.D."/>
        </authorList>
    </citation>
    <scope>INTERACTION WITH PRKX</scope>
</reference>
<reference key="15">
    <citation type="journal article" date="2009" name="Science">
        <title>Lysine acetylation targets protein complexes and co-regulates major cellular functions.</title>
        <authorList>
            <person name="Choudhary C."/>
            <person name="Kumar C."/>
            <person name="Gnad F."/>
            <person name="Nielsen M.L."/>
            <person name="Rehman M."/>
            <person name="Walther T.C."/>
            <person name="Olsen J.V."/>
            <person name="Mann M."/>
        </authorList>
    </citation>
    <scope>ACETYLATION [LARGE SCALE ANALYSIS] AT LYS-46</scope>
    <scope>IDENTIFICATION BY MASS SPECTROMETRY [LARGE SCALE ANALYSIS]</scope>
</reference>
<reference key="16">
    <citation type="journal article" date="2011" name="BMC Syst. Biol.">
        <title>Initial characterization of the human central proteome.</title>
        <authorList>
            <person name="Burkard T.R."/>
            <person name="Planyavsky M."/>
            <person name="Kaupe I."/>
            <person name="Breitwieser F.P."/>
            <person name="Buerckstuemmer T."/>
            <person name="Bennett K.L."/>
            <person name="Superti-Furga G."/>
            <person name="Colinge J."/>
        </authorList>
    </citation>
    <scope>IDENTIFICATION BY MASS SPECTROMETRY [LARGE SCALE ANALYSIS]</scope>
</reference>
<reference key="17">
    <citation type="journal article" date="2011" name="J. Biol. Chem.">
        <title>Mitogen-activated protein kinase extracellular signal-regulated kinase 2 phosphorylates and promotes Pin1 protein-dependent promyelocytic leukemia protein turnover.</title>
        <authorList>
            <person name="Lim J.H."/>
            <person name="Liu Y."/>
            <person name="Reineke E."/>
            <person name="Kao H.Y."/>
        </authorList>
    </citation>
    <scope>FUNCTION</scope>
    <scope>INTERACTION WITH PML</scope>
</reference>
<reference key="18">
    <citation type="journal article" date="2011" name="Mol. Cell">
        <title>Death-associated protein kinase 1 phosphorylates Pin1 and inhibits its prolyl isomerase activity and cellular function.</title>
        <authorList>
            <person name="Lee T.H."/>
            <person name="Chen C.H."/>
            <person name="Suizu F."/>
            <person name="Huang P."/>
            <person name="Schiene-Fischer C."/>
            <person name="Daum S."/>
            <person name="Zhang Y.J."/>
            <person name="Goate A."/>
            <person name="Chen R.H."/>
            <person name="Zhou X.Z."/>
            <person name="Lu K.P."/>
        </authorList>
    </citation>
    <scope>FUNCTION</scope>
    <scope>CATALYTIC ACTIVITY</scope>
    <scope>PHOSPHORYLATION AT SER-71</scope>
    <scope>INTERACTION WITH DAPK1</scope>
    <scope>SUBCELLULAR LOCATION</scope>
    <scope>MUTAGENESIS OF SER-71</scope>
    <scope>TISSUE SPECIFICITY</scope>
</reference>
<reference key="19">
    <citation type="journal article" date="2012" name="Mol. Cell">
        <title>Negative regulation of the stability and tumor suppressor function of Fbw7 by the Pin1 prolyl isomerase.</title>
        <authorList>
            <person name="Min S.H."/>
            <person name="Lau A.W."/>
            <person name="Lee T.H."/>
            <person name="Inuzuka H."/>
            <person name="Wei S."/>
            <person name="Huang P."/>
            <person name="Shaik S."/>
            <person name="Lee D.Y."/>
            <person name="Finn G."/>
            <person name="Balastik M."/>
            <person name="Chen C.H."/>
            <person name="Luo M."/>
            <person name="Tron A.E."/>
            <person name="Decaprio J.A."/>
            <person name="Zhou X.Z."/>
            <person name="Wei W."/>
            <person name="Lu K.P."/>
        </authorList>
    </citation>
    <scope>FUNCTION</scope>
    <scope>INTERACTION WITH FBXW7</scope>
    <scope>MUTAGENESIS OF TRP-34 AND LYS-63</scope>
</reference>
<reference key="20">
    <citation type="journal article" date="2013" name="J. Proteome Res.">
        <title>Toward a comprehensive characterization of a human cancer cell phosphoproteome.</title>
        <authorList>
            <person name="Zhou H."/>
            <person name="Di Palma S."/>
            <person name="Preisinger C."/>
            <person name="Peng M."/>
            <person name="Polat A.N."/>
            <person name="Heck A.J."/>
            <person name="Mohammed S."/>
        </authorList>
    </citation>
    <scope>PHOSPHORYLATION [LARGE SCALE ANALYSIS] AT SER-43</scope>
    <scope>IDENTIFICATION BY MASS SPECTROMETRY [LARGE SCALE ANALYSIS]</scope>
    <source>
        <tissue>Cervix carcinoma</tissue>
        <tissue>Erythroleukemia</tissue>
    </source>
</reference>
<reference key="21">
    <citation type="journal article" date="2013" name="Mol. Cell">
        <title>Prolyl isomerase PIN1 regulates DNA double-strand break repair by counteracting DNA end resection.</title>
        <authorList>
            <person name="Steger M."/>
            <person name="Murina O."/>
            <person name="Huehn D."/>
            <person name="Ferretti L.P."/>
            <person name="Walser R."/>
            <person name="Haenggi K."/>
            <person name="Lafranchi L."/>
            <person name="Neugebauer C."/>
            <person name="Paliwal S."/>
            <person name="Janscak P."/>
            <person name="Gerrits B."/>
            <person name="Del Sal G."/>
            <person name="Zerbe O."/>
            <person name="Sartori A.A."/>
        </authorList>
    </citation>
    <scope>FUNCTION</scope>
    <scope>CATALYTIC ACTIVITY</scope>
    <scope>INTERACTION WITH RBBP8</scope>
    <scope>SUBCELLULAR LOCATION</scope>
    <scope>MUTAGENESIS OF TRP-34 AND CYS-113</scope>
</reference>
<reference key="22">
    <citation type="journal article" date="2016" name="Mol. Cell">
        <title>Mitochondria-Translocated PGK1 Functions as a Protein Kinase to Coordinate Glycolysis and the TCA Cycle in Tumorigenesis.</title>
        <authorList>
            <person name="Li X."/>
            <person name="Jiang Y."/>
            <person name="Meisenhelder J."/>
            <person name="Yang W."/>
            <person name="Hawke D.H."/>
            <person name="Zheng Y."/>
            <person name="Xia Y."/>
            <person name="Aldape K."/>
            <person name="He J."/>
            <person name="Hunter T."/>
            <person name="Wang L."/>
            <person name="Lu Z."/>
        </authorList>
    </citation>
    <scope>FUNCTION</scope>
    <scope>INTERACTION WITH PGK1</scope>
    <scope>MUTAGENESIS OF CYS-113</scope>
</reference>
<reference key="23">
    <citation type="journal article" date="2016" name="Nat. Commun.">
        <title>Cullin3-KLHL15 ubiquitin ligase mediates CtIP protein turnover to fine-tune DNA-end resection.</title>
        <authorList>
            <person name="Ferretti L.P."/>
            <person name="Himmels S.F."/>
            <person name="Trenner A."/>
            <person name="Walker C."/>
            <person name="von Aesch C."/>
            <person name="Eggenschwiler A."/>
            <person name="Murina O."/>
            <person name="Enchev R.I."/>
            <person name="Peter M."/>
            <person name="Freire R."/>
            <person name="Porro A."/>
            <person name="Sartori A.A."/>
        </authorList>
    </citation>
    <scope>FUNCTION</scope>
</reference>
<reference key="24">
    <citation type="journal article" date="2018" name="Nat. Commun.">
        <title>The IL-33-PIN1-IRAK-M axis is critical for type 2 immunity in IL-33-induced allergic airway inflammation.</title>
        <authorList>
            <person name="Nechama M."/>
            <person name="Kwon J."/>
            <person name="Wei S."/>
            <person name="Kyi A.T."/>
            <person name="Welner R.S."/>
            <person name="Ben-Dov I.Z."/>
            <person name="Arredouani M.S."/>
            <person name="Asara J.M."/>
            <person name="Chen C.H."/>
            <person name="Tsai C.Y."/>
            <person name="Nelson K.F."/>
            <person name="Kobayashi K.S."/>
            <person name="Israel E."/>
            <person name="Zhou X.Z."/>
            <person name="Nicholson L.K."/>
            <person name="Lu K.P."/>
        </authorList>
    </citation>
    <scope>FUNCTION</scope>
    <scope>CATALYTIC ACTIVITY</scope>
    <scope>INTERACTION WITH IRAK3</scope>
    <scope>TISSUE SPECIFICITY</scope>
    <scope>PHOSPHORYLATION AT SER-71</scope>
    <scope>MUTAGENESIS OF TRP-34 AND LYS-63</scope>
</reference>
<reference key="25">
    <citation type="journal article" date="1997" name="Cell">
        <title>Structural and functional analysis of the mitotic rotamase Pin1 suggests substrate recognition is phosphorylation dependent.</title>
        <authorList>
            <person name="Ranganathan R."/>
            <person name="Lu K.P."/>
            <person name="Hunter T."/>
            <person name="Noel J.P."/>
        </authorList>
    </citation>
    <scope>X-RAY CRYSTALLOGRAPHY (1.35 ANGSTROMS)</scope>
</reference>
<evidence type="ECO:0000250" key="1">
    <source>
        <dbReference type="UniProtKB" id="Q9QUR7"/>
    </source>
</evidence>
<evidence type="ECO:0000255" key="2">
    <source>
        <dbReference type="PROSITE-ProRule" id="PRU00224"/>
    </source>
</evidence>
<evidence type="ECO:0000255" key="3">
    <source>
        <dbReference type="PROSITE-ProRule" id="PRU00278"/>
    </source>
</evidence>
<evidence type="ECO:0000256" key="4">
    <source>
        <dbReference type="SAM" id="MobiDB-lite"/>
    </source>
</evidence>
<evidence type="ECO:0000269" key="5">
    <source>
    </source>
</evidence>
<evidence type="ECO:0000269" key="6">
    <source>
    </source>
</evidence>
<evidence type="ECO:0000269" key="7">
    <source>
    </source>
</evidence>
<evidence type="ECO:0000269" key="8">
    <source>
    </source>
</evidence>
<evidence type="ECO:0000269" key="9">
    <source>
    </source>
</evidence>
<evidence type="ECO:0000269" key="10">
    <source>
    </source>
</evidence>
<evidence type="ECO:0000269" key="11">
    <source>
    </source>
</evidence>
<evidence type="ECO:0000269" key="12">
    <source>
    </source>
</evidence>
<evidence type="ECO:0000269" key="13">
    <source>
    </source>
</evidence>
<evidence type="ECO:0000269" key="14">
    <source>
    </source>
</evidence>
<evidence type="ECO:0000269" key="15">
    <source>
    </source>
</evidence>
<evidence type="ECO:0000269" key="16">
    <source>
    </source>
</evidence>
<evidence type="ECO:0000269" key="17">
    <source>
    </source>
</evidence>
<evidence type="ECO:0000269" key="18">
    <source>
    </source>
</evidence>
<evidence type="ECO:0007744" key="19">
    <source>
    </source>
</evidence>
<evidence type="ECO:0007744" key="20">
    <source>
    </source>
</evidence>
<evidence type="ECO:0007744" key="21">
    <source>
    </source>
</evidence>
<evidence type="ECO:0007829" key="22">
    <source>
        <dbReference type="PDB" id="1I6C"/>
    </source>
</evidence>
<evidence type="ECO:0007829" key="23">
    <source>
        <dbReference type="PDB" id="1PIN"/>
    </source>
</evidence>
<evidence type="ECO:0007829" key="24">
    <source>
        <dbReference type="PDB" id="2RUD"/>
    </source>
</evidence>
<evidence type="ECO:0007829" key="25">
    <source>
        <dbReference type="PDB" id="3I6C"/>
    </source>
</evidence>
<evidence type="ECO:0007829" key="26">
    <source>
        <dbReference type="PDB" id="3TC5"/>
    </source>
</evidence>
<evidence type="ECO:0007829" key="27">
    <source>
        <dbReference type="PDB" id="7SA5"/>
    </source>
</evidence>
<evidence type="ECO:0007829" key="28">
    <source>
        <dbReference type="PDB" id="7SUQ"/>
    </source>
</evidence>
<dbReference type="EC" id="5.2.1.8" evidence="12 15 18"/>
<dbReference type="EMBL" id="U49070">
    <property type="protein sequence ID" value="AAC50492.1"/>
    <property type="molecule type" value="mRNA"/>
</dbReference>
<dbReference type="EMBL" id="CR407654">
    <property type="protein sequence ID" value="CAG28582.1"/>
    <property type="molecule type" value="mRNA"/>
</dbReference>
<dbReference type="EMBL" id="BT019331">
    <property type="protein sequence ID" value="AAV38138.1"/>
    <property type="molecule type" value="mRNA"/>
</dbReference>
<dbReference type="EMBL" id="AK291074">
    <property type="protein sequence ID" value="BAF83763.1"/>
    <property type="molecule type" value="mRNA"/>
</dbReference>
<dbReference type="EMBL" id="CH471106">
    <property type="protein sequence ID" value="EAW84057.1"/>
    <property type="molecule type" value="Genomic_DNA"/>
</dbReference>
<dbReference type="EMBL" id="BC002899">
    <property type="protein sequence ID" value="AAH02899.1"/>
    <property type="molecule type" value="mRNA"/>
</dbReference>
<dbReference type="CCDS" id="CCDS12220.1"/>
<dbReference type="PIR" id="S68520">
    <property type="entry name" value="S68520"/>
</dbReference>
<dbReference type="RefSeq" id="NP_006212.1">
    <property type="nucleotide sequence ID" value="NM_006221.4"/>
</dbReference>
<dbReference type="PDB" id="1F8A">
    <property type="method" value="X-ray"/>
    <property type="resolution" value="1.84 A"/>
    <property type="chains" value="B=1-163"/>
</dbReference>
<dbReference type="PDB" id="1I6C">
    <property type="method" value="NMR"/>
    <property type="chains" value="A=6-44"/>
</dbReference>
<dbReference type="PDB" id="1I8G">
    <property type="method" value="NMR"/>
    <property type="chains" value="B=6-44"/>
</dbReference>
<dbReference type="PDB" id="1I8H">
    <property type="method" value="NMR"/>
    <property type="chains" value="B=6-44"/>
</dbReference>
<dbReference type="PDB" id="1NMV">
    <property type="method" value="NMR"/>
    <property type="chains" value="A=1-163"/>
</dbReference>
<dbReference type="PDB" id="1NMW">
    <property type="method" value="NMR"/>
    <property type="chains" value="A=50-163"/>
</dbReference>
<dbReference type="PDB" id="1PIN">
    <property type="method" value="X-ray"/>
    <property type="resolution" value="1.35 A"/>
    <property type="chains" value="A=1-163"/>
</dbReference>
<dbReference type="PDB" id="1ZCN">
    <property type="method" value="X-ray"/>
    <property type="resolution" value="1.90 A"/>
    <property type="chains" value="A=1-161"/>
</dbReference>
<dbReference type="PDB" id="2F21">
    <property type="method" value="X-ray"/>
    <property type="resolution" value="1.50 A"/>
    <property type="chains" value="A=1-162"/>
</dbReference>
<dbReference type="PDB" id="2ITK">
    <property type="method" value="X-ray"/>
    <property type="resolution" value="1.45 A"/>
    <property type="chains" value="A=1-163"/>
</dbReference>
<dbReference type="PDB" id="2KBU">
    <property type="method" value="NMR"/>
    <property type="chains" value="A=6-39"/>
</dbReference>
<dbReference type="PDB" id="2KCF">
    <property type="method" value="NMR"/>
    <property type="chains" value="A=6-39"/>
</dbReference>
<dbReference type="PDB" id="2LB3">
    <property type="method" value="NMR"/>
    <property type="chains" value="A=6-41"/>
</dbReference>
<dbReference type="PDB" id="2M8I">
    <property type="method" value="NMR"/>
    <property type="chains" value="A=1-39"/>
</dbReference>
<dbReference type="PDB" id="2M8J">
    <property type="method" value="NMR"/>
    <property type="chains" value="A=1-39"/>
</dbReference>
<dbReference type="PDB" id="2M9E">
    <property type="method" value="NMR"/>
    <property type="chains" value="A=6-15, A=22-39"/>
</dbReference>
<dbReference type="PDB" id="2M9F">
    <property type="method" value="NMR"/>
    <property type="chains" value="A=6-15, A=22-39"/>
</dbReference>
<dbReference type="PDB" id="2M9I">
    <property type="method" value="NMR"/>
    <property type="chains" value="A=6-39"/>
</dbReference>
<dbReference type="PDB" id="2M9J">
    <property type="method" value="NMR"/>
    <property type="chains" value="A=6-39"/>
</dbReference>
<dbReference type="PDB" id="2N1O">
    <property type="method" value="NMR"/>
    <property type="chains" value="A=7-39"/>
</dbReference>
<dbReference type="PDB" id="2Q5A">
    <property type="method" value="X-ray"/>
    <property type="resolution" value="1.50 A"/>
    <property type="chains" value="A=1-163"/>
</dbReference>
<dbReference type="PDB" id="2RUC">
    <property type="method" value="NMR"/>
    <property type="chains" value="A=51-163"/>
</dbReference>
<dbReference type="PDB" id="2RUD">
    <property type="method" value="NMR"/>
    <property type="chains" value="A=51-163"/>
</dbReference>
<dbReference type="PDB" id="2RUQ">
    <property type="method" value="NMR"/>
    <property type="chains" value="A=51-163"/>
</dbReference>
<dbReference type="PDB" id="2RUR">
    <property type="method" value="NMR"/>
    <property type="chains" value="A=51-163"/>
</dbReference>
<dbReference type="PDB" id="2XP3">
    <property type="method" value="X-ray"/>
    <property type="resolution" value="2.00 A"/>
    <property type="chains" value="A=1-163"/>
</dbReference>
<dbReference type="PDB" id="2XP4">
    <property type="method" value="X-ray"/>
    <property type="resolution" value="1.80 A"/>
    <property type="chains" value="A=1-163"/>
</dbReference>
<dbReference type="PDB" id="2XP5">
    <property type="method" value="X-ray"/>
    <property type="resolution" value="1.90 A"/>
    <property type="chains" value="A=1-163"/>
</dbReference>
<dbReference type="PDB" id="2XP6">
    <property type="method" value="X-ray"/>
    <property type="resolution" value="1.90 A"/>
    <property type="chains" value="A=1-163"/>
</dbReference>
<dbReference type="PDB" id="2XP7">
    <property type="method" value="X-ray"/>
    <property type="resolution" value="2.00 A"/>
    <property type="chains" value="A=1-163"/>
</dbReference>
<dbReference type="PDB" id="2XP8">
    <property type="method" value="X-ray"/>
    <property type="resolution" value="2.10 A"/>
    <property type="chains" value="A=1-163"/>
</dbReference>
<dbReference type="PDB" id="2XP9">
    <property type="method" value="X-ray"/>
    <property type="resolution" value="1.90 A"/>
    <property type="chains" value="A=1-163"/>
</dbReference>
<dbReference type="PDB" id="2XPA">
    <property type="method" value="X-ray"/>
    <property type="resolution" value="1.90 A"/>
    <property type="chains" value="A=1-163"/>
</dbReference>
<dbReference type="PDB" id="2XPB">
    <property type="method" value="X-ray"/>
    <property type="resolution" value="2.00 A"/>
    <property type="chains" value="A=1-163"/>
</dbReference>
<dbReference type="PDB" id="2ZQS">
    <property type="method" value="X-ray"/>
    <property type="resolution" value="1.90 A"/>
    <property type="chains" value="A=1-163"/>
</dbReference>
<dbReference type="PDB" id="2ZQT">
    <property type="method" value="X-ray"/>
    <property type="resolution" value="1.46 A"/>
    <property type="chains" value="A=1-163"/>
</dbReference>
<dbReference type="PDB" id="2ZQU">
    <property type="method" value="X-ray"/>
    <property type="resolution" value="2.50 A"/>
    <property type="chains" value="A=1-163"/>
</dbReference>
<dbReference type="PDB" id="2ZQV">
    <property type="method" value="X-ray"/>
    <property type="resolution" value="2.50 A"/>
    <property type="chains" value="A=1-163"/>
</dbReference>
<dbReference type="PDB" id="2ZR4">
    <property type="method" value="X-ray"/>
    <property type="resolution" value="2.00 A"/>
    <property type="chains" value="A=1-163"/>
</dbReference>
<dbReference type="PDB" id="2ZR5">
    <property type="method" value="X-ray"/>
    <property type="resolution" value="2.60 A"/>
    <property type="chains" value="A=1-163"/>
</dbReference>
<dbReference type="PDB" id="2ZR6">
    <property type="method" value="X-ray"/>
    <property type="resolution" value="3.20 A"/>
    <property type="chains" value="A=1-163"/>
</dbReference>
<dbReference type="PDB" id="3I6C">
    <property type="method" value="X-ray"/>
    <property type="resolution" value="1.30 A"/>
    <property type="chains" value="A/B=45-163"/>
</dbReference>
<dbReference type="PDB" id="3IK8">
    <property type="method" value="X-ray"/>
    <property type="resolution" value="1.85 A"/>
    <property type="chains" value="A/B=45-163"/>
</dbReference>
<dbReference type="PDB" id="3IKD">
    <property type="method" value="X-ray"/>
    <property type="resolution" value="2.00 A"/>
    <property type="chains" value="A/B=45-163"/>
</dbReference>
<dbReference type="PDB" id="3IKG">
    <property type="method" value="X-ray"/>
    <property type="resolution" value="1.86 A"/>
    <property type="chains" value="A/B=45-163"/>
</dbReference>
<dbReference type="PDB" id="3JYJ">
    <property type="method" value="X-ray"/>
    <property type="resolution" value="1.87 A"/>
    <property type="chains" value="A/B=45-163"/>
</dbReference>
<dbReference type="PDB" id="3KAB">
    <property type="method" value="X-ray"/>
    <property type="resolution" value="2.19 A"/>
    <property type="chains" value="A=1-163"/>
</dbReference>
<dbReference type="PDB" id="3KAC">
    <property type="method" value="X-ray"/>
    <property type="resolution" value="2.00 A"/>
    <property type="chains" value="A/B=45-163"/>
</dbReference>
<dbReference type="PDB" id="3KAD">
    <property type="method" value="X-ray"/>
    <property type="resolution" value="1.95 A"/>
    <property type="chains" value="A=1-163"/>
</dbReference>
<dbReference type="PDB" id="3KAF">
    <property type="method" value="X-ray"/>
    <property type="resolution" value="2.30 A"/>
    <property type="chains" value="A=1-163"/>
</dbReference>
<dbReference type="PDB" id="3KAG">
    <property type="method" value="X-ray"/>
    <property type="resolution" value="1.90 A"/>
    <property type="chains" value="A=1-163"/>
</dbReference>
<dbReference type="PDB" id="3KAH">
    <property type="method" value="X-ray"/>
    <property type="resolution" value="2.30 A"/>
    <property type="chains" value="A=1-163"/>
</dbReference>
<dbReference type="PDB" id="3KAI">
    <property type="method" value="X-ray"/>
    <property type="resolution" value="1.90 A"/>
    <property type="chains" value="A=1-163"/>
</dbReference>
<dbReference type="PDB" id="3KCE">
    <property type="method" value="X-ray"/>
    <property type="resolution" value="1.90 A"/>
    <property type="chains" value="A=1-163"/>
</dbReference>
<dbReference type="PDB" id="3NTP">
    <property type="method" value="X-ray"/>
    <property type="resolution" value="1.76 A"/>
    <property type="chains" value="A=1-163"/>
</dbReference>
<dbReference type="PDB" id="3ODK">
    <property type="method" value="X-ray"/>
    <property type="resolution" value="2.30 A"/>
    <property type="chains" value="A=1-163"/>
</dbReference>
<dbReference type="PDB" id="3OOB">
    <property type="method" value="X-ray"/>
    <property type="resolution" value="1.89 A"/>
    <property type="chains" value="A=1-163"/>
</dbReference>
<dbReference type="PDB" id="3TC5">
    <property type="method" value="X-ray"/>
    <property type="resolution" value="1.40 A"/>
    <property type="chains" value="A=1-163"/>
</dbReference>
<dbReference type="PDB" id="3TCZ">
    <property type="method" value="X-ray"/>
    <property type="resolution" value="2.10 A"/>
    <property type="chains" value="A=6-163"/>
</dbReference>
<dbReference type="PDB" id="3TDB">
    <property type="method" value="X-ray"/>
    <property type="resolution" value="2.27 A"/>
    <property type="chains" value="A=6-163"/>
</dbReference>
<dbReference type="PDB" id="3WH0">
    <property type="method" value="X-ray"/>
    <property type="resolution" value="1.60 A"/>
    <property type="chains" value="A=1-163"/>
</dbReference>
<dbReference type="PDB" id="4GWT">
    <property type="method" value="X-ray"/>
    <property type="resolution" value="2.25 A"/>
    <property type="chains" value="A=6-39"/>
</dbReference>
<dbReference type="PDB" id="4GWV">
    <property type="method" value="X-ray"/>
    <property type="resolution" value="3.05 A"/>
    <property type="chains" value="A=6-39"/>
</dbReference>
<dbReference type="PDB" id="4QIB">
    <property type="method" value="X-ray"/>
    <property type="resolution" value="1.86 A"/>
    <property type="chains" value="A=7-163"/>
</dbReference>
<dbReference type="PDB" id="4TNS">
    <property type="method" value="X-ray"/>
    <property type="resolution" value="1.33 A"/>
    <property type="chains" value="A/B=43-163"/>
</dbReference>
<dbReference type="PDB" id="4TYO">
    <property type="method" value="X-ray"/>
    <property type="resolution" value="1.75 A"/>
    <property type="chains" value="A/B=45-163"/>
</dbReference>
<dbReference type="PDB" id="4U84">
    <property type="method" value="X-ray"/>
    <property type="resolution" value="1.78 A"/>
    <property type="chains" value="A=1-163"/>
</dbReference>
<dbReference type="PDB" id="4U85">
    <property type="method" value="X-ray"/>
    <property type="resolution" value="1.70 A"/>
    <property type="chains" value="A=1-163"/>
</dbReference>
<dbReference type="PDB" id="4U86">
    <property type="method" value="X-ray"/>
    <property type="resolution" value="1.60 A"/>
    <property type="chains" value="A=1-163"/>
</dbReference>
<dbReference type="PDB" id="5B3W">
    <property type="method" value="X-ray"/>
    <property type="resolution" value="2.40 A"/>
    <property type="chains" value="A/B=5-15"/>
</dbReference>
<dbReference type="PDB" id="5B3X">
    <property type="method" value="X-ray"/>
    <property type="resolution" value="2.40 A"/>
    <property type="chains" value="A=5-15"/>
</dbReference>
<dbReference type="PDB" id="5B3Y">
    <property type="method" value="X-ray"/>
    <property type="resolution" value="1.90 A"/>
    <property type="chains" value="A=5-23"/>
</dbReference>
<dbReference type="PDB" id="5B3Z">
    <property type="method" value="X-ray"/>
    <property type="resolution" value="2.30 A"/>
    <property type="chains" value="A/B/C/D=5-39"/>
</dbReference>
<dbReference type="PDB" id="5BMY">
    <property type="method" value="X-ray"/>
    <property type="resolution" value="2.00 A"/>
    <property type="chains" value="A=5-29"/>
</dbReference>
<dbReference type="PDB" id="5GPH">
    <property type="method" value="NMR"/>
    <property type="chains" value="A=51-163"/>
</dbReference>
<dbReference type="PDB" id="5UY9">
    <property type="method" value="X-ray"/>
    <property type="resolution" value="1.85 A"/>
    <property type="chains" value="A=1-163"/>
</dbReference>
<dbReference type="PDB" id="5VTI">
    <property type="method" value="X-ray"/>
    <property type="resolution" value="1.80 A"/>
    <property type="chains" value="A=6-39"/>
</dbReference>
<dbReference type="PDB" id="5VTJ">
    <property type="method" value="X-ray"/>
    <property type="resolution" value="1.50 A"/>
    <property type="chains" value="A=6-39"/>
</dbReference>
<dbReference type="PDB" id="5VTK">
    <property type="method" value="X-ray"/>
    <property type="resolution" value="1.99 A"/>
    <property type="chains" value="A=6-39"/>
</dbReference>
<dbReference type="PDB" id="6DUN">
    <property type="method" value="X-ray"/>
    <property type="resolution" value="1.59 A"/>
    <property type="chains" value="A/B=46-163"/>
</dbReference>
<dbReference type="PDB" id="6O33">
    <property type="method" value="X-ray"/>
    <property type="resolution" value="1.74 A"/>
    <property type="chains" value="A=1-163"/>
</dbReference>
<dbReference type="PDB" id="6O34">
    <property type="method" value="X-ray"/>
    <property type="resolution" value="1.57 A"/>
    <property type="chains" value="A=1-163"/>
</dbReference>
<dbReference type="PDB" id="6SVC">
    <property type="method" value="NMR"/>
    <property type="chains" value="A=6-39"/>
</dbReference>
<dbReference type="PDB" id="6SVE">
    <property type="method" value="NMR"/>
    <property type="chains" value="A=6-39"/>
</dbReference>
<dbReference type="PDB" id="6SVH">
    <property type="method" value="NMR"/>
    <property type="chains" value="A=6-39"/>
</dbReference>
<dbReference type="PDB" id="6VAJ">
    <property type="method" value="X-ray"/>
    <property type="resolution" value="1.42 A"/>
    <property type="chains" value="A=1-163"/>
</dbReference>
<dbReference type="PDB" id="7AOG">
    <property type="method" value="X-ray"/>
    <property type="resolution" value="1.50 A"/>
    <property type="chains" value="P=61-77"/>
</dbReference>
<dbReference type="PDB" id="7AXN">
    <property type="method" value="X-ray"/>
    <property type="resolution" value="1.40 A"/>
    <property type="chains" value="P=61-77"/>
</dbReference>
<dbReference type="PDB" id="7AYF">
    <property type="method" value="X-ray"/>
    <property type="resolution" value="1.75 A"/>
    <property type="chains" value="P=61-77"/>
</dbReference>
<dbReference type="PDB" id="7AZ1">
    <property type="method" value="X-ray"/>
    <property type="resolution" value="1.15 A"/>
    <property type="chains" value="P=61-77"/>
</dbReference>
<dbReference type="PDB" id="7AZ2">
    <property type="method" value="X-ray"/>
    <property type="resolution" value="1.08 A"/>
    <property type="chains" value="P=61-77"/>
</dbReference>
<dbReference type="PDB" id="7BDP">
    <property type="method" value="X-ray"/>
    <property type="resolution" value="1.75 A"/>
    <property type="chains" value="P=61-77"/>
</dbReference>
<dbReference type="PDB" id="7BDT">
    <property type="method" value="X-ray"/>
    <property type="resolution" value="1.75 A"/>
    <property type="chains" value="P=61-77"/>
</dbReference>
<dbReference type="PDB" id="7BDY">
    <property type="method" value="X-ray"/>
    <property type="resolution" value="1.80 A"/>
    <property type="chains" value="P=61-77"/>
</dbReference>
<dbReference type="PDB" id="7BFW">
    <property type="method" value="X-ray"/>
    <property type="resolution" value="1.80 A"/>
    <property type="chains" value="P=61-77"/>
</dbReference>
<dbReference type="PDB" id="7BG3">
    <property type="method" value="X-ray"/>
    <property type="resolution" value="1.40 A"/>
    <property type="chains" value="P=61-77"/>
</dbReference>
<dbReference type="PDB" id="7BGQ">
    <property type="method" value="X-ray"/>
    <property type="resolution" value="1.75 A"/>
    <property type="chains" value="P=61-77"/>
</dbReference>
<dbReference type="PDB" id="7BGR">
    <property type="method" value="X-ray"/>
    <property type="resolution" value="1.80 A"/>
    <property type="chains" value="P=61-77"/>
</dbReference>
<dbReference type="PDB" id="7BGV">
    <property type="method" value="X-ray"/>
    <property type="resolution" value="1.68 A"/>
    <property type="chains" value="P=61-77"/>
</dbReference>
<dbReference type="PDB" id="7BGW">
    <property type="method" value="X-ray"/>
    <property type="resolution" value="1.90 A"/>
    <property type="chains" value="P=61-77"/>
</dbReference>
<dbReference type="PDB" id="7EFJ">
    <property type="method" value="X-ray"/>
    <property type="resolution" value="1.99 A"/>
    <property type="chains" value="A=1-163"/>
</dbReference>
<dbReference type="PDB" id="7EFX">
    <property type="method" value="X-ray"/>
    <property type="resolution" value="2.41 A"/>
    <property type="chains" value="A=1-163"/>
</dbReference>
<dbReference type="PDB" id="7EKV">
    <property type="method" value="X-ray"/>
    <property type="resolution" value="1.95 A"/>
    <property type="chains" value="A=1-163"/>
</dbReference>
<dbReference type="PDB" id="7F0M">
    <property type="method" value="X-ray"/>
    <property type="resolution" value="1.90 A"/>
    <property type="chains" value="A/B/C/D=1-163"/>
</dbReference>
<dbReference type="PDB" id="7NIF">
    <property type="method" value="X-ray"/>
    <property type="resolution" value="1.71 A"/>
    <property type="chains" value="P=61-77"/>
</dbReference>
<dbReference type="PDB" id="7NIG">
    <property type="method" value="X-ray"/>
    <property type="resolution" value="1.90 A"/>
    <property type="chains" value="P=61-77"/>
</dbReference>
<dbReference type="PDB" id="7NJ6">
    <property type="method" value="X-ray"/>
    <property type="resolution" value="1.59 A"/>
    <property type="chains" value="P=61-77"/>
</dbReference>
<dbReference type="PDB" id="7NJ8">
    <property type="method" value="X-ray"/>
    <property type="resolution" value="1.80 A"/>
    <property type="chains" value="P=61-77"/>
</dbReference>
<dbReference type="PDB" id="7NJA">
    <property type="method" value="X-ray"/>
    <property type="resolution" value="1.75 A"/>
    <property type="chains" value="P=61-77"/>
</dbReference>
<dbReference type="PDB" id="7NRK">
    <property type="method" value="X-ray"/>
    <property type="resolution" value="1.75 A"/>
    <property type="chains" value="P=61-77"/>
</dbReference>
<dbReference type="PDB" id="7NRL">
    <property type="method" value="X-ray"/>
    <property type="resolution" value="1.80 A"/>
    <property type="chains" value="P=61-77"/>
</dbReference>
<dbReference type="PDB" id="7OQ9">
    <property type="method" value="X-ray"/>
    <property type="resolution" value="1.80 A"/>
    <property type="chains" value="P=61-77"/>
</dbReference>
<dbReference type="PDB" id="7OQA">
    <property type="method" value="X-ray"/>
    <property type="resolution" value="1.80 A"/>
    <property type="chains" value="P=61-77"/>
</dbReference>
<dbReference type="PDB" id="7SA5">
    <property type="method" value="NMR"/>
    <property type="chains" value="A=1-163"/>
</dbReference>
<dbReference type="PDB" id="7SUQ">
    <property type="method" value="NMR"/>
    <property type="chains" value="A=1-163"/>
</dbReference>
<dbReference type="PDB" id="7SUR">
    <property type="method" value="NMR"/>
    <property type="chains" value="A=1-163"/>
</dbReference>
<dbReference type="PDB" id="8C2G">
    <property type="method" value="X-ray"/>
    <property type="resolution" value="1.60 A"/>
    <property type="chains" value="P=61-77"/>
</dbReference>
<dbReference type="PDB" id="8C3C">
    <property type="method" value="X-ray"/>
    <property type="resolution" value="1.60 A"/>
    <property type="chains" value="B=61-77"/>
</dbReference>
<dbReference type="PDB" id="8SG2">
    <property type="method" value="NMR"/>
    <property type="chains" value="A=1-163"/>
</dbReference>
<dbReference type="PDB" id="8VJD">
    <property type="method" value="X-ray"/>
    <property type="resolution" value="1.57 A"/>
    <property type="chains" value="A/B=1-163"/>
</dbReference>
<dbReference type="PDB" id="8VJE">
    <property type="method" value="X-ray"/>
    <property type="resolution" value="1.70 A"/>
    <property type="chains" value="A=1-163"/>
</dbReference>
<dbReference type="PDB" id="8VJF">
    <property type="method" value="X-ray"/>
    <property type="resolution" value="1.70 A"/>
    <property type="chains" value="A=1-163"/>
</dbReference>
<dbReference type="PDB" id="8VJG">
    <property type="method" value="X-ray"/>
    <property type="resolution" value="1.58 A"/>
    <property type="chains" value="A=1-163"/>
</dbReference>
<dbReference type="PDB" id="9INR">
    <property type="method" value="X-ray"/>
    <property type="resolution" value="1.93 A"/>
    <property type="chains" value="A/B=1-163"/>
</dbReference>
<dbReference type="PDB" id="9IT1">
    <property type="method" value="X-ray"/>
    <property type="resolution" value="2.00 A"/>
    <property type="chains" value="A=1-163"/>
</dbReference>
<dbReference type="PDBsum" id="1F8A"/>
<dbReference type="PDBsum" id="1I6C"/>
<dbReference type="PDBsum" id="1I8G"/>
<dbReference type="PDBsum" id="1I8H"/>
<dbReference type="PDBsum" id="1NMV"/>
<dbReference type="PDBsum" id="1NMW"/>
<dbReference type="PDBsum" id="1PIN"/>
<dbReference type="PDBsum" id="1ZCN"/>
<dbReference type="PDBsum" id="2F21"/>
<dbReference type="PDBsum" id="2ITK"/>
<dbReference type="PDBsum" id="2KBU"/>
<dbReference type="PDBsum" id="2KCF"/>
<dbReference type="PDBsum" id="2LB3"/>
<dbReference type="PDBsum" id="2M8I"/>
<dbReference type="PDBsum" id="2M8J"/>
<dbReference type="PDBsum" id="2M9E"/>
<dbReference type="PDBsum" id="2M9F"/>
<dbReference type="PDBsum" id="2M9I"/>
<dbReference type="PDBsum" id="2M9J"/>
<dbReference type="PDBsum" id="2N1O"/>
<dbReference type="PDBsum" id="2Q5A"/>
<dbReference type="PDBsum" id="2RUC"/>
<dbReference type="PDBsum" id="2RUD"/>
<dbReference type="PDBsum" id="2RUQ"/>
<dbReference type="PDBsum" id="2RUR"/>
<dbReference type="PDBsum" id="2XP3"/>
<dbReference type="PDBsum" id="2XP4"/>
<dbReference type="PDBsum" id="2XP5"/>
<dbReference type="PDBsum" id="2XP6"/>
<dbReference type="PDBsum" id="2XP7"/>
<dbReference type="PDBsum" id="2XP8"/>
<dbReference type="PDBsum" id="2XP9"/>
<dbReference type="PDBsum" id="2XPA"/>
<dbReference type="PDBsum" id="2XPB"/>
<dbReference type="PDBsum" id="2ZQS"/>
<dbReference type="PDBsum" id="2ZQT"/>
<dbReference type="PDBsum" id="2ZQU"/>
<dbReference type="PDBsum" id="2ZQV"/>
<dbReference type="PDBsum" id="2ZR4"/>
<dbReference type="PDBsum" id="2ZR5"/>
<dbReference type="PDBsum" id="2ZR6"/>
<dbReference type="PDBsum" id="3I6C"/>
<dbReference type="PDBsum" id="3IK8"/>
<dbReference type="PDBsum" id="3IKD"/>
<dbReference type="PDBsum" id="3IKG"/>
<dbReference type="PDBsum" id="3JYJ"/>
<dbReference type="PDBsum" id="3KAB"/>
<dbReference type="PDBsum" id="3KAC"/>
<dbReference type="PDBsum" id="3KAD"/>
<dbReference type="PDBsum" id="3KAF"/>
<dbReference type="PDBsum" id="3KAG"/>
<dbReference type="PDBsum" id="3KAH"/>
<dbReference type="PDBsum" id="3KAI"/>
<dbReference type="PDBsum" id="3KCE"/>
<dbReference type="PDBsum" id="3NTP"/>
<dbReference type="PDBsum" id="3ODK"/>
<dbReference type="PDBsum" id="3OOB"/>
<dbReference type="PDBsum" id="3TC5"/>
<dbReference type="PDBsum" id="3TCZ"/>
<dbReference type="PDBsum" id="3TDB"/>
<dbReference type="PDBsum" id="3WH0"/>
<dbReference type="PDBsum" id="4GWT"/>
<dbReference type="PDBsum" id="4GWV"/>
<dbReference type="PDBsum" id="4QIB"/>
<dbReference type="PDBsum" id="4TNS"/>
<dbReference type="PDBsum" id="4TYO"/>
<dbReference type="PDBsum" id="4U84"/>
<dbReference type="PDBsum" id="4U85"/>
<dbReference type="PDBsum" id="4U86"/>
<dbReference type="PDBsum" id="5B3W"/>
<dbReference type="PDBsum" id="5B3X"/>
<dbReference type="PDBsum" id="5B3Y"/>
<dbReference type="PDBsum" id="5B3Z"/>
<dbReference type="PDBsum" id="5BMY"/>
<dbReference type="PDBsum" id="5GPH"/>
<dbReference type="PDBsum" id="5UY9"/>
<dbReference type="PDBsum" id="5VTI"/>
<dbReference type="PDBsum" id="5VTJ"/>
<dbReference type="PDBsum" id="5VTK"/>
<dbReference type="PDBsum" id="6DUN"/>
<dbReference type="PDBsum" id="6O33"/>
<dbReference type="PDBsum" id="6O34"/>
<dbReference type="PDBsum" id="6SVC"/>
<dbReference type="PDBsum" id="6SVE"/>
<dbReference type="PDBsum" id="6SVH"/>
<dbReference type="PDBsum" id="6VAJ"/>
<dbReference type="PDBsum" id="7AOG"/>
<dbReference type="PDBsum" id="7AXN"/>
<dbReference type="PDBsum" id="7AYF"/>
<dbReference type="PDBsum" id="7AZ1"/>
<dbReference type="PDBsum" id="7AZ2"/>
<dbReference type="PDBsum" id="7BDP"/>
<dbReference type="PDBsum" id="7BDT"/>
<dbReference type="PDBsum" id="7BDY"/>
<dbReference type="PDBsum" id="7BFW"/>
<dbReference type="PDBsum" id="7BG3"/>
<dbReference type="PDBsum" id="7BGQ"/>
<dbReference type="PDBsum" id="7BGR"/>
<dbReference type="PDBsum" id="7BGV"/>
<dbReference type="PDBsum" id="7BGW"/>
<dbReference type="PDBsum" id="7EFJ"/>
<dbReference type="PDBsum" id="7EFX"/>
<dbReference type="PDBsum" id="7EKV"/>
<dbReference type="PDBsum" id="7F0M"/>
<dbReference type="PDBsum" id="7NIF"/>
<dbReference type="PDBsum" id="7NIG"/>
<dbReference type="PDBsum" id="7NJ6"/>
<dbReference type="PDBsum" id="7NJ8"/>
<dbReference type="PDBsum" id="7NJA"/>
<dbReference type="PDBsum" id="7NRK"/>
<dbReference type="PDBsum" id="7NRL"/>
<dbReference type="PDBsum" id="7OQ9"/>
<dbReference type="PDBsum" id="7OQA"/>
<dbReference type="PDBsum" id="7SA5"/>
<dbReference type="PDBsum" id="7SUQ"/>
<dbReference type="PDBsum" id="7SUR"/>
<dbReference type="PDBsum" id="8C2G"/>
<dbReference type="PDBsum" id="8C3C"/>
<dbReference type="PDBsum" id="8SG2"/>
<dbReference type="PDBsum" id="8VJD"/>
<dbReference type="PDBsum" id="8VJE"/>
<dbReference type="PDBsum" id="8VJF"/>
<dbReference type="PDBsum" id="8VJG"/>
<dbReference type="PDBsum" id="9INR"/>
<dbReference type="PDBsum" id="9IT1"/>
<dbReference type="BMRB" id="Q13526"/>
<dbReference type="SMR" id="Q13526"/>
<dbReference type="BioGRID" id="111317">
    <property type="interactions" value="391"/>
</dbReference>
<dbReference type="CORUM" id="Q13526"/>
<dbReference type="DIP" id="DIP-29306N"/>
<dbReference type="ELM" id="Q13526"/>
<dbReference type="FunCoup" id="Q13526">
    <property type="interactions" value="2240"/>
</dbReference>
<dbReference type="IntAct" id="Q13526">
    <property type="interactions" value="227"/>
</dbReference>
<dbReference type="MINT" id="Q13526"/>
<dbReference type="STRING" id="9606.ENSP00000247970"/>
<dbReference type="BindingDB" id="Q13526"/>
<dbReference type="ChEMBL" id="CHEMBL2288"/>
<dbReference type="DrugBank" id="DB06867">
    <property type="generic name" value="3,6,9,12,15,18-HEXAOXAICOSANE"/>
</dbReference>
<dbReference type="DrugBank" id="DB01766">
    <property type="generic name" value="Beta-(2-Naphthyl)-Alanine"/>
</dbReference>
<dbReference type="DrugCentral" id="Q13526"/>
<dbReference type="GuidetoPHARMACOLOGY" id="3171"/>
<dbReference type="GlyGen" id="Q13526">
    <property type="glycosylation" value="5 sites, 1 O-linked glycan (1 site)"/>
</dbReference>
<dbReference type="iPTMnet" id="Q13526"/>
<dbReference type="MetOSite" id="Q13526"/>
<dbReference type="PhosphoSitePlus" id="Q13526"/>
<dbReference type="BioMuta" id="PIN1"/>
<dbReference type="DMDM" id="3024406"/>
<dbReference type="jPOST" id="Q13526"/>
<dbReference type="MassIVE" id="Q13526"/>
<dbReference type="PaxDb" id="9606-ENSP00000247970"/>
<dbReference type="PeptideAtlas" id="Q13526"/>
<dbReference type="ProteomicsDB" id="59519"/>
<dbReference type="Pumba" id="Q13526"/>
<dbReference type="Antibodypedia" id="3867">
    <property type="antibodies" value="767 antibodies from 43 providers"/>
</dbReference>
<dbReference type="DNASU" id="5300"/>
<dbReference type="Ensembl" id="ENST00000247970.9">
    <property type="protein sequence ID" value="ENSP00000247970.5"/>
    <property type="gene ID" value="ENSG00000127445.14"/>
</dbReference>
<dbReference type="Ensembl" id="ENST00000588695.5">
    <property type="protein sequence ID" value="ENSP00000466962.1"/>
    <property type="gene ID" value="ENSG00000127445.14"/>
</dbReference>
<dbReference type="GeneID" id="5300"/>
<dbReference type="KEGG" id="hsa:5300"/>
<dbReference type="MANE-Select" id="ENST00000247970.9">
    <property type="protein sequence ID" value="ENSP00000247970.5"/>
    <property type="RefSeq nucleotide sequence ID" value="NM_006221.4"/>
    <property type="RefSeq protein sequence ID" value="NP_006212.1"/>
</dbReference>
<dbReference type="UCSC" id="uc002mml.3">
    <property type="organism name" value="human"/>
</dbReference>
<dbReference type="AGR" id="HGNC:8988"/>
<dbReference type="CTD" id="5300"/>
<dbReference type="DisGeNET" id="5300"/>
<dbReference type="GeneCards" id="PIN1"/>
<dbReference type="HGNC" id="HGNC:8988">
    <property type="gene designation" value="PIN1"/>
</dbReference>
<dbReference type="HPA" id="ENSG00000127445">
    <property type="expression patterns" value="Tissue enhanced (brain)"/>
</dbReference>
<dbReference type="MIM" id="601052">
    <property type="type" value="gene"/>
</dbReference>
<dbReference type="neXtProt" id="NX_Q13526"/>
<dbReference type="OpenTargets" id="ENSG00000127445"/>
<dbReference type="PharmGKB" id="PA33320"/>
<dbReference type="VEuPathDB" id="HostDB:ENSG00000127445"/>
<dbReference type="eggNOG" id="KOG3259">
    <property type="taxonomic scope" value="Eukaryota"/>
</dbReference>
<dbReference type="GeneTree" id="ENSGT00640000091578"/>
<dbReference type="HOGENOM" id="CLU_090028_0_1_1"/>
<dbReference type="InParanoid" id="Q13526"/>
<dbReference type="OMA" id="DEVQCLH"/>
<dbReference type="OrthoDB" id="2530521at2759"/>
<dbReference type="PAN-GO" id="Q13526">
    <property type="GO annotations" value="3 GO annotations based on evolutionary models"/>
</dbReference>
<dbReference type="PhylomeDB" id="Q13526"/>
<dbReference type="TreeFam" id="TF101101"/>
<dbReference type="BRENDA" id="5.2.1.8">
    <property type="organism ID" value="2681"/>
</dbReference>
<dbReference type="PathwayCommons" id="Q13526"/>
<dbReference type="Reactome" id="R-HSA-1169408">
    <property type="pathway name" value="ISG15 antiviral mechanism"/>
</dbReference>
<dbReference type="Reactome" id="R-HSA-5668599">
    <property type="pathway name" value="RHO GTPases Activate NADPH Oxidases"/>
</dbReference>
<dbReference type="Reactome" id="R-HSA-6804756">
    <property type="pathway name" value="Regulation of TP53 Activity through Phosphorylation"/>
</dbReference>
<dbReference type="Reactome" id="R-HSA-6811555">
    <property type="pathway name" value="PI5P Regulates TP53 Acetylation"/>
</dbReference>
<dbReference type="Reactome" id="R-HSA-936440">
    <property type="pathway name" value="Negative regulators of DDX58/IFIH1 signaling"/>
</dbReference>
<dbReference type="SignaLink" id="Q13526"/>
<dbReference type="SIGNOR" id="Q13526"/>
<dbReference type="BioGRID-ORCS" id="5300">
    <property type="hits" value="16 hits in 1157 CRISPR screens"/>
</dbReference>
<dbReference type="CD-CODE" id="804901D1">
    <property type="entry name" value="Nuclear speckle"/>
</dbReference>
<dbReference type="CD-CODE" id="8C2F96ED">
    <property type="entry name" value="Centrosome"/>
</dbReference>
<dbReference type="CD-CODE" id="FB4E32DD">
    <property type="entry name" value="Presynaptic clusters and postsynaptic densities"/>
</dbReference>
<dbReference type="ChiTaRS" id="PIN1">
    <property type="organism name" value="human"/>
</dbReference>
<dbReference type="EvolutionaryTrace" id="Q13526"/>
<dbReference type="GeneWiki" id="PIN1"/>
<dbReference type="GenomeRNAi" id="5300"/>
<dbReference type="Pharos" id="Q13526">
    <property type="development level" value="Tchem"/>
</dbReference>
<dbReference type="PRO" id="PR:Q13526"/>
<dbReference type="Proteomes" id="UP000005640">
    <property type="component" value="Chromosome 19"/>
</dbReference>
<dbReference type="RNAct" id="Q13526">
    <property type="molecule type" value="protein"/>
</dbReference>
<dbReference type="Bgee" id="ENSG00000127445">
    <property type="expression patterns" value="Expressed in right frontal lobe and 193 other cell types or tissues"/>
</dbReference>
<dbReference type="ExpressionAtlas" id="Q13526">
    <property type="expression patterns" value="baseline and differential"/>
</dbReference>
<dbReference type="GO" id="GO:0036064">
    <property type="term" value="C:ciliary basal body"/>
    <property type="evidence" value="ECO:0000314"/>
    <property type="project" value="GO_Central"/>
</dbReference>
<dbReference type="GO" id="GO:0005737">
    <property type="term" value="C:cytoplasm"/>
    <property type="evidence" value="ECO:0000314"/>
    <property type="project" value="UniProtKB"/>
</dbReference>
<dbReference type="GO" id="GO:0005829">
    <property type="term" value="C:cytosol"/>
    <property type="evidence" value="ECO:0000314"/>
    <property type="project" value="HPA"/>
</dbReference>
<dbReference type="GO" id="GO:0098978">
    <property type="term" value="C:glutamatergic synapse"/>
    <property type="evidence" value="ECO:0000314"/>
    <property type="project" value="SynGO"/>
</dbReference>
<dbReference type="GO" id="GO:0030496">
    <property type="term" value="C:midbody"/>
    <property type="evidence" value="ECO:0000314"/>
    <property type="project" value="MGI"/>
</dbReference>
<dbReference type="GO" id="GO:0016607">
    <property type="term" value="C:nuclear speck"/>
    <property type="evidence" value="ECO:0007669"/>
    <property type="project" value="UniProtKB-SubCell"/>
</dbReference>
<dbReference type="GO" id="GO:0005654">
    <property type="term" value="C:nucleoplasm"/>
    <property type="evidence" value="ECO:0000314"/>
    <property type="project" value="HPA"/>
</dbReference>
<dbReference type="GO" id="GO:0005634">
    <property type="term" value="C:nucleus"/>
    <property type="evidence" value="ECO:0000314"/>
    <property type="project" value="UniProtKB"/>
</dbReference>
<dbReference type="GO" id="GO:0099524">
    <property type="term" value="C:postsynaptic cytosol"/>
    <property type="evidence" value="ECO:0000314"/>
    <property type="project" value="SynGO"/>
</dbReference>
<dbReference type="GO" id="GO:0008013">
    <property type="term" value="F:beta-catenin binding"/>
    <property type="evidence" value="ECO:0000353"/>
    <property type="project" value="ParkinsonsUK-UCL"/>
</dbReference>
<dbReference type="GO" id="GO:0016859">
    <property type="term" value="F:cis-trans isomerase activity"/>
    <property type="evidence" value="ECO:0000315"/>
    <property type="project" value="UniProtKB"/>
</dbReference>
<dbReference type="GO" id="GO:0003774">
    <property type="term" value="F:cytoskeletal motor activity"/>
    <property type="evidence" value="ECO:0000250"/>
    <property type="project" value="ParkinsonsUK-UCL"/>
</dbReference>
<dbReference type="GO" id="GO:0032794">
    <property type="term" value="F:GTPase activating protein binding"/>
    <property type="evidence" value="ECO:0000353"/>
    <property type="project" value="BHF-UCL"/>
</dbReference>
<dbReference type="GO" id="GO:0031434">
    <property type="term" value="F:mitogen-activated protein kinase kinase binding"/>
    <property type="evidence" value="ECO:0000353"/>
    <property type="project" value="BHF-UCL"/>
</dbReference>
<dbReference type="GO" id="GO:0003755">
    <property type="term" value="F:peptidyl-prolyl cis-trans isomerase activity"/>
    <property type="evidence" value="ECO:0000314"/>
    <property type="project" value="UniProtKB"/>
</dbReference>
<dbReference type="GO" id="GO:0051219">
    <property type="term" value="F:phosphoprotein binding"/>
    <property type="evidence" value="ECO:0000250"/>
    <property type="project" value="ARUK-UCL"/>
</dbReference>
<dbReference type="GO" id="GO:0050815">
    <property type="term" value="F:phosphoserine residue binding"/>
    <property type="evidence" value="ECO:0000314"/>
    <property type="project" value="BHF-UCL"/>
</dbReference>
<dbReference type="GO" id="GO:0050816">
    <property type="term" value="F:phosphothreonine residue binding"/>
    <property type="evidence" value="ECO:0000314"/>
    <property type="project" value="BHF-UCL"/>
</dbReference>
<dbReference type="GO" id="GO:0048156">
    <property type="term" value="F:tau protein binding"/>
    <property type="evidence" value="ECO:0000303"/>
    <property type="project" value="ARUK-UCL"/>
</dbReference>
<dbReference type="GO" id="GO:1990757">
    <property type="term" value="F:ubiquitin ligase activator activity"/>
    <property type="evidence" value="ECO:0000314"/>
    <property type="project" value="BHF-UCL"/>
</dbReference>
<dbReference type="GO" id="GO:0071456">
    <property type="term" value="P:cellular response to hypoxia"/>
    <property type="evidence" value="ECO:0000315"/>
    <property type="project" value="UniProtKB"/>
</dbReference>
<dbReference type="GO" id="GO:1902430">
    <property type="term" value="P:negative regulation of amyloid-beta formation"/>
    <property type="evidence" value="ECO:0000315"/>
    <property type="project" value="UniProtKB"/>
</dbReference>
<dbReference type="GO" id="GO:2000146">
    <property type="term" value="P:negative regulation of cell motility"/>
    <property type="evidence" value="ECO:0000314"/>
    <property type="project" value="BHF-UCL"/>
</dbReference>
<dbReference type="GO" id="GO:0070373">
    <property type="term" value="P:negative regulation of ERK1 and ERK2 cascade"/>
    <property type="evidence" value="ECO:0000314"/>
    <property type="project" value="BHF-UCL"/>
</dbReference>
<dbReference type="GO" id="GO:0032091">
    <property type="term" value="P:negative regulation of protein binding"/>
    <property type="evidence" value="ECO:0000314"/>
    <property type="project" value="ParkinsonsUK-UCL"/>
</dbReference>
<dbReference type="GO" id="GO:0042177">
    <property type="term" value="P:negative regulation of protein catabolic process"/>
    <property type="evidence" value="ECO:0000314"/>
    <property type="project" value="ParkinsonsUK-UCL"/>
</dbReference>
<dbReference type="GO" id="GO:0060392">
    <property type="term" value="P:negative regulation of SMAD protein signal transduction"/>
    <property type="evidence" value="ECO:0000314"/>
    <property type="project" value="BHF-UCL"/>
</dbReference>
<dbReference type="GO" id="GO:0030512">
    <property type="term" value="P:negative regulation of transforming growth factor beta receptor signaling pathway"/>
    <property type="evidence" value="ECO:0000314"/>
    <property type="project" value="BHF-UCL"/>
</dbReference>
<dbReference type="GO" id="GO:0030182">
    <property type="term" value="P:neuron differentiation"/>
    <property type="evidence" value="ECO:0000250"/>
    <property type="project" value="ParkinsonsUK-UCL"/>
</dbReference>
<dbReference type="GO" id="GO:0090263">
    <property type="term" value="P:positive regulation of canonical Wnt signaling pathway"/>
    <property type="evidence" value="ECO:0000314"/>
    <property type="project" value="ParkinsonsUK-UCL"/>
</dbReference>
<dbReference type="GO" id="GO:0001934">
    <property type="term" value="P:positive regulation of protein phosphorylation"/>
    <property type="evidence" value="ECO:0000316"/>
    <property type="project" value="MGI"/>
</dbReference>
<dbReference type="GO" id="GO:0045944">
    <property type="term" value="P:positive regulation of transcription by RNA polymerase II"/>
    <property type="evidence" value="ECO:0000314"/>
    <property type="project" value="ParkinsonsUK-UCL"/>
</dbReference>
<dbReference type="GO" id="GO:0000413">
    <property type="term" value="P:protein peptidyl-prolyl isomerization"/>
    <property type="evidence" value="ECO:0000314"/>
    <property type="project" value="UniProtKB"/>
</dbReference>
<dbReference type="GO" id="GO:0050821">
    <property type="term" value="P:protein stabilization"/>
    <property type="evidence" value="ECO:0000314"/>
    <property type="project" value="ParkinsonsUK-UCL"/>
</dbReference>
<dbReference type="GO" id="GO:0006626">
    <property type="term" value="P:protein targeting to mitochondrion"/>
    <property type="evidence" value="ECO:0000315"/>
    <property type="project" value="UniProtKB"/>
</dbReference>
<dbReference type="GO" id="GO:0032465">
    <property type="term" value="P:regulation of cytokinesis"/>
    <property type="evidence" value="ECO:0000315"/>
    <property type="project" value="MGI"/>
</dbReference>
<dbReference type="GO" id="GO:0010468">
    <property type="term" value="P:regulation of gene expression"/>
    <property type="evidence" value="ECO:0000314"/>
    <property type="project" value="ARUK-UCL"/>
</dbReference>
<dbReference type="GO" id="GO:0007088">
    <property type="term" value="P:regulation of mitotic nuclear division"/>
    <property type="evidence" value="ECO:0000304"/>
    <property type="project" value="ProtInc"/>
</dbReference>
<dbReference type="GO" id="GO:1900180">
    <property type="term" value="P:regulation of protein localization to nucleus"/>
    <property type="evidence" value="ECO:0000314"/>
    <property type="project" value="ParkinsonsUK-UCL"/>
</dbReference>
<dbReference type="GO" id="GO:0031647">
    <property type="term" value="P:regulation of protein stability"/>
    <property type="evidence" value="ECO:0000315"/>
    <property type="project" value="UniProtKB"/>
</dbReference>
<dbReference type="GO" id="GO:0001666">
    <property type="term" value="P:response to hypoxia"/>
    <property type="evidence" value="ECO:0000314"/>
    <property type="project" value="UniProtKB"/>
</dbReference>
<dbReference type="GO" id="GO:0007266">
    <property type="term" value="P:Rho protein signal transduction"/>
    <property type="evidence" value="ECO:0000315"/>
    <property type="project" value="BHF-UCL"/>
</dbReference>
<dbReference type="GO" id="GO:0050808">
    <property type="term" value="P:synapse organization"/>
    <property type="evidence" value="ECO:0000250"/>
    <property type="project" value="ParkinsonsUK-UCL"/>
</dbReference>
<dbReference type="CDD" id="cd00201">
    <property type="entry name" value="WW"/>
    <property type="match status" value="1"/>
</dbReference>
<dbReference type="DisProt" id="DP02727"/>
<dbReference type="FunFam" id="2.20.70.10:FF:000046">
    <property type="entry name" value="Peptidyl-prolyl cis-trans isomerase"/>
    <property type="match status" value="1"/>
</dbReference>
<dbReference type="FunFam" id="3.10.50.40:FF:000010">
    <property type="entry name" value="Peptidyl-prolyl cis-trans isomerase Pin1"/>
    <property type="match status" value="1"/>
</dbReference>
<dbReference type="Gene3D" id="2.20.70.10">
    <property type="match status" value="1"/>
</dbReference>
<dbReference type="Gene3D" id="3.10.50.40">
    <property type="match status" value="1"/>
</dbReference>
<dbReference type="InterPro" id="IPR046357">
    <property type="entry name" value="PPIase_dom_sf"/>
</dbReference>
<dbReference type="InterPro" id="IPR051370">
    <property type="entry name" value="PPIase_Pin1"/>
</dbReference>
<dbReference type="InterPro" id="IPR000297">
    <property type="entry name" value="PPIase_PpiC"/>
</dbReference>
<dbReference type="InterPro" id="IPR023058">
    <property type="entry name" value="PPIase_PpiC_CS"/>
</dbReference>
<dbReference type="InterPro" id="IPR001202">
    <property type="entry name" value="WW_dom"/>
</dbReference>
<dbReference type="InterPro" id="IPR036020">
    <property type="entry name" value="WW_dom_sf"/>
</dbReference>
<dbReference type="PANTHER" id="PTHR10657">
    <property type="entry name" value="PEPTIDYL-PROLYL CIS-TRANS ISOMERASE"/>
    <property type="match status" value="1"/>
</dbReference>
<dbReference type="PANTHER" id="PTHR10657:SF4">
    <property type="entry name" value="PEPTIDYL-PROLYL CIS-TRANS ISOMERASE-RELATED"/>
    <property type="match status" value="1"/>
</dbReference>
<dbReference type="Pfam" id="PF00639">
    <property type="entry name" value="Rotamase"/>
    <property type="match status" value="1"/>
</dbReference>
<dbReference type="Pfam" id="PF00397">
    <property type="entry name" value="WW"/>
    <property type="match status" value="1"/>
</dbReference>
<dbReference type="SMART" id="SM00456">
    <property type="entry name" value="WW"/>
    <property type="match status" value="1"/>
</dbReference>
<dbReference type="SUPFAM" id="SSF54534">
    <property type="entry name" value="FKBP-like"/>
    <property type="match status" value="1"/>
</dbReference>
<dbReference type="SUPFAM" id="SSF51045">
    <property type="entry name" value="WW domain"/>
    <property type="match status" value="1"/>
</dbReference>
<dbReference type="PROSITE" id="PS01096">
    <property type="entry name" value="PPIC_PPIASE_1"/>
    <property type="match status" value="1"/>
</dbReference>
<dbReference type="PROSITE" id="PS50198">
    <property type="entry name" value="PPIC_PPIASE_2"/>
    <property type="match status" value="1"/>
</dbReference>
<dbReference type="PROSITE" id="PS01159">
    <property type="entry name" value="WW_DOMAIN_1"/>
    <property type="match status" value="1"/>
</dbReference>
<dbReference type="PROSITE" id="PS50020">
    <property type="entry name" value="WW_DOMAIN_2"/>
    <property type="match status" value="1"/>
</dbReference>
<organism>
    <name type="scientific">Homo sapiens</name>
    <name type="common">Human</name>
    <dbReference type="NCBI Taxonomy" id="9606"/>
    <lineage>
        <taxon>Eukaryota</taxon>
        <taxon>Metazoa</taxon>
        <taxon>Chordata</taxon>
        <taxon>Craniata</taxon>
        <taxon>Vertebrata</taxon>
        <taxon>Euteleostomi</taxon>
        <taxon>Mammalia</taxon>
        <taxon>Eutheria</taxon>
        <taxon>Euarchontoglires</taxon>
        <taxon>Primates</taxon>
        <taxon>Haplorrhini</taxon>
        <taxon>Catarrhini</taxon>
        <taxon>Hominidae</taxon>
        <taxon>Homo</taxon>
    </lineage>
</organism>
<name>PIN1_HUMAN</name>
<accession>Q13526</accession>
<accession>A8K4V9</accession>
<accession>Q53X75</accession>
<comment type="function">
    <text evidence="6 8 9 12 13 14 15 16 17 18">Peptidyl-prolyl cis/trans isomerase (PPIase) that binds to and isomerizes specific phosphorylated Ser/Thr-Pro (pSer/Thr-Pro) motifs (PubMed:21497122, PubMed:23623683, PubMed:29686383). By inducing conformational changes in a subset of phosphorylated proteins, acts as a molecular switch in multiple cellular processes (PubMed:21497122, PubMed:22033920, PubMed:23623683). Displays a preference for acidic residues located N-terminally to the proline bond to be isomerized. Regulates mitosis presumably by interacting with NIMA and attenuating its mitosis-promoting activity. Down-regulates kinase activity of BTK (PubMed:16644721). Can transactivate multiple oncogenes and induce centrosome amplification, chromosome instability and cell transformation. Required for the efficient dephosphorylation and recycling of RAF1 after mitogen activation (PubMed:15664191). Binds and targets PML and BCL6 for degradation in a phosphorylation-dependent manner (PubMed:17828269). Acts as a regulator of JNK cascade by binding to phosphorylated FBXW7, disrupting FBXW7 dimerization and promoting FBXW7 autoubiquitination and degradation: degradation of FBXW7 leads to subsequent stabilization of JUN (PubMed:22608923). May facilitate the ubiquitination and proteasomal degradation of RBBP8/CtIP through CUL3/KLHL15 E3 ubiquitin-protein ligase complex, hence favors DNA double-strand repair through error-prone non-homologous end joining (NHEJ) over error-free, RBBP8-mediated homologous recombination (HR) (PubMed:23623683, PubMed:27561354). Upon IL33-induced lung inflammation, catalyzes cis-trans isomerization of phosphorylated IRAK3/IRAK-M, inducing IRAK3 stabilization, nuclear translocation and expression of pro-inflammatory genes in dendritic cells (PubMed:29686383). Catalyzes cis-trans isomerization of phosphorylated phosphoglycerate kinase PGK1 under hypoxic conditions to promote its binding to the TOM complex and targeting to the mitochondrion (PubMed:26942675).</text>
</comment>
<comment type="catalytic activity">
    <reaction evidence="12 15 18">
        <text>[protein]-peptidylproline (omega=180) = [protein]-peptidylproline (omega=0)</text>
        <dbReference type="Rhea" id="RHEA:16237"/>
        <dbReference type="Rhea" id="RHEA-COMP:10747"/>
        <dbReference type="Rhea" id="RHEA-COMP:10748"/>
        <dbReference type="ChEBI" id="CHEBI:83833"/>
        <dbReference type="ChEBI" id="CHEBI:83834"/>
        <dbReference type="EC" id="5.2.1.8"/>
    </reaction>
</comment>
<comment type="subunit">
    <text evidence="1 5 6 7 8 9 10 11 12 13 14 15 16 18">Interacts with STIL (By similarity). Interacts with KIF20B (PubMed:11470801). Interacts with NEK6 (PubMed:16476580). Interacts (via WW domain) with PRKX (PubMed:19367327). Interacts with BTK (PubMed:16644721). Interacts (via PpiC domain) with DAPK1 (PubMed:21497122). Interacts with the phosphorylated form of RAF1 (PubMed:15664191). Interacts (via WW domain) with ATCAY; upon NGF stimulation (PubMed:18628984). Interacts with PML (isoform PML-4) (PubMed:22033920). Interacts with BCL6 (PubMed:17828269). Interacts with FBXW7, disrupting FBXW7 dimerization and promoting FBXW7 autoubiquitination and degradation (PubMed:22608923). Directly interacts with RBBP8/CtIP; this interaction depends upon RBBP8 phosphorylation (PubMed:23623683). Interacts (via WW domain) with IRAK3/IRAK-M (when phosphorylated at 'Ser-110') in response to IL33-mediated (but not TLR4 ligand LPS) dendritic cell stimulation (PubMed:29686383). Interacts with PGK1 (when phosphorylated at 'Ser-203'); the interaction is direct, occurs under hypoxic conditions, and targets PGK1 to the mitochondrion by promoting interactions with the TOM complex (PubMed:26942675).</text>
</comment>
<comment type="interaction">
    <interactant intactId="EBI-714158">
        <id>Q13526</id>
    </interactant>
    <interactant intactId="EBI-743598">
        <id>Q9NYB9</id>
        <label>ABI2</label>
    </interactant>
    <organismsDiffer>false</organismsDiffer>
    <experiments>5</experiments>
</comment>
<comment type="interaction">
    <interactant intactId="EBI-714158">
        <id>Q13526</id>
    </interactant>
    <interactant intactId="EBI-11096309">
        <id>Q9NYB9-2</id>
        <label>ABI2</label>
    </interactant>
    <organismsDiffer>false</organismsDiffer>
    <experiments>3</experiments>
</comment>
<comment type="interaction">
    <interactant intactId="EBI-714158">
        <id>Q13526</id>
    </interactant>
    <interactant intactId="EBI-717681">
        <id>Q13085</id>
        <label>ACACA</label>
    </interactant>
    <organismsDiffer>false</organismsDiffer>
    <experiments>9</experiments>
</comment>
<comment type="interaction">
    <interactant intactId="EBI-714158">
        <id>Q13526</id>
    </interactant>
    <interactant intactId="EBI-10173507">
        <id>Q6UY14-3</id>
        <label>ADAMTSL4</label>
    </interactant>
    <organismsDiffer>false</organismsDiffer>
    <experiments>3</experiments>
</comment>
<comment type="interaction">
    <interactant intactId="EBI-714158">
        <id>Q13526</id>
    </interactant>
    <interactant intactId="EBI-2967304">
        <id>P78563</id>
        <label>ADARB1</label>
    </interactant>
    <organismsDiffer>false</organismsDiffer>
    <experiments>12</experiments>
</comment>
<comment type="interaction">
    <interactant intactId="EBI-714158">
        <id>Q13526</id>
    </interactant>
    <interactant intactId="EBI-949782">
        <id>Q96IF1</id>
        <label>AJUBA</label>
    </interactant>
    <organismsDiffer>false</organismsDiffer>
    <experiments>3</experiments>
</comment>
<comment type="interaction">
    <interactant intactId="EBI-714158">
        <id>Q13526</id>
    </interactant>
    <interactant intactId="EBI-17286414">
        <id>A2BDD9</id>
        <label>AMOT</label>
    </interactant>
    <organismsDiffer>false</organismsDiffer>
    <experiments>3</experiments>
</comment>
<comment type="interaction">
    <interactant intactId="EBI-714158">
        <id>Q13526</id>
    </interactant>
    <interactant intactId="EBI-3891843">
        <id>Q4VCS5-2</id>
        <label>AMOT</label>
    </interactant>
    <organismsDiffer>false</organismsDiffer>
    <experiments>3</experiments>
</comment>
<comment type="interaction">
    <interactant intactId="EBI-714158">
        <id>Q13526</id>
    </interactant>
    <interactant intactId="EBI-2838246">
        <id>Q6AI12</id>
        <label>ANKRD40</label>
    </interactant>
    <organismsDiffer>false</organismsDiffer>
    <experiments>6</experiments>
</comment>
<comment type="interaction">
    <interactant intactId="EBI-714158">
        <id>Q13526</id>
    </interactant>
    <interactant intactId="EBI-77613">
        <id>P05067</id>
        <label>APP</label>
    </interactant>
    <organismsDiffer>false</organismsDiffer>
    <experiments>4</experiments>
</comment>
<comment type="interaction">
    <interactant intactId="EBI-714158">
        <id>Q13526</id>
    </interactant>
    <interactant intactId="EBI-302641">
        <id>P05067-4</id>
        <label>APP</label>
    </interactant>
    <organismsDiffer>false</organismsDiffer>
    <experiments>2</experiments>
</comment>
<comment type="interaction">
    <interactant intactId="EBI-714158">
        <id>Q13526</id>
    </interactant>
    <interactant intactId="EBI-9523517">
        <id>P85298-4</id>
        <label>ARHGAP8</label>
    </interactant>
    <organismsDiffer>false</organismsDiffer>
    <experiments>25</experiments>
</comment>
<comment type="interaction">
    <interactant intactId="EBI-714158">
        <id>Q13526</id>
    </interactant>
    <interactant intactId="EBI-740691">
        <id>O94989</id>
        <label>ARHGEF15</label>
    </interactant>
    <organismsDiffer>false</organismsDiffer>
    <experiments>3</experiments>
</comment>
<comment type="interaction">
    <interactant intactId="EBI-714158">
        <id>Q13526</id>
    </interactant>
    <interactant intactId="EBI-948603">
        <id>Q03989</id>
        <label>ARID5A</label>
    </interactant>
    <organismsDiffer>false</organismsDiffer>
    <experiments>3</experiments>
</comment>
<comment type="interaction">
    <interactant intactId="EBI-714158">
        <id>Q13526</id>
    </interactant>
    <interactant intactId="EBI-11954292">
        <id>Q86V38</id>
        <label>ATN1</label>
    </interactant>
    <organismsDiffer>false</organismsDiffer>
    <experiments>3</experiments>
</comment>
<comment type="interaction">
    <interactant intactId="EBI-714158">
        <id>Q13526</id>
    </interactant>
    <interactant intactId="EBI-21498323">
        <id>Q99728-1</id>
        <label>BARD1</label>
    </interactant>
    <organismsDiffer>false</organismsDiffer>
    <experiments>4</experiments>
</comment>
<comment type="interaction">
    <interactant intactId="EBI-714158">
        <id>Q13526</id>
    </interactant>
    <interactant intactId="EBI-10183342">
        <id>Q9H165-2</id>
        <label>BCL11A</label>
    </interactant>
    <organismsDiffer>false</organismsDiffer>
    <experiments>3</experiments>
</comment>
<comment type="interaction">
    <interactant intactId="EBI-714158">
        <id>Q13526</id>
    </interactant>
    <interactant intactId="EBI-21498346">
        <id>P38398-1</id>
        <label>BRCA1</label>
    </interactant>
    <organismsDiffer>false</organismsDiffer>
    <experiments>4</experiments>
</comment>
<comment type="interaction">
    <interactant intactId="EBI-714158">
        <id>Q13526</id>
    </interactant>
    <interactant intactId="EBI-10304361">
        <id>Q9H0E9-2</id>
        <label>BRD8</label>
    </interactant>
    <organismsDiffer>false</organismsDiffer>
    <experiments>3</experiments>
</comment>
<comment type="interaction">
    <interactant intactId="EBI-714158">
        <id>Q13526</id>
    </interactant>
    <interactant intactId="EBI-18036948">
        <id>Q3SXR2</id>
        <label>C3orf36</label>
    </interactant>
    <organismsDiffer>false</organismsDiffer>
    <experiments>3</experiments>
</comment>
<comment type="interaction">
    <interactant intactId="EBI-714158">
        <id>Q13526</id>
    </interactant>
    <interactant intactId="EBI-740135">
        <id>P35520</id>
        <label>CBS</label>
    </interactant>
    <organismsDiffer>false</organismsDiffer>
    <experiments>4</experiments>
</comment>
<comment type="interaction">
    <interactant intactId="EBI-714158">
        <id>Q13526</id>
    </interactant>
    <interactant intactId="EBI-741724">
        <id>Q8NA61</id>
        <label>CBY2</label>
    </interactant>
    <organismsDiffer>false</organismsDiffer>
    <experiments>3</experiments>
</comment>
<comment type="interaction">
    <interactant intactId="EBI-714158">
        <id>Q13526</id>
    </interactant>
    <interactant intactId="EBI-11524851">
        <id>Q8NA61-2</id>
        <label>CBY2</label>
    </interactant>
    <organismsDiffer>false</organismsDiffer>
    <experiments>3</experiments>
</comment>
<comment type="interaction">
    <interactant intactId="EBI-714158">
        <id>Q13526</id>
    </interactant>
    <interactant intactId="EBI-10179526">
        <id>Q52MB2</id>
        <label>CCDC184</label>
    </interactant>
    <organismsDiffer>false</organismsDiffer>
    <experiments>6</experiments>
</comment>
<comment type="interaction">
    <interactant intactId="EBI-714158">
        <id>Q13526</id>
    </interactant>
    <interactant intactId="EBI-1045350">
        <id>Q16204</id>
        <label>CCDC6</label>
    </interactant>
    <organismsDiffer>false</organismsDiffer>
    <experiments>6</experiments>
</comment>
<comment type="interaction">
    <interactant intactId="EBI-714158">
        <id>Q13526</id>
    </interactant>
    <interactant intactId="EBI-347573">
        <id>A6NC98</id>
        <label>CCDC88B</label>
    </interactant>
    <organismsDiffer>false</organismsDiffer>
    <experiments>3</experiments>
</comment>
<comment type="interaction">
    <interactant intactId="EBI-714158">
        <id>Q13526</id>
    </interactant>
    <interactant intactId="EBI-1646959">
        <id>Q15131</id>
        <label>CDK10</label>
    </interactant>
    <organismsDiffer>false</organismsDiffer>
    <experiments>5</experiments>
</comment>
<comment type="interaction">
    <interactant intactId="EBI-714158">
        <id>Q13526</id>
    </interactant>
    <interactant intactId="EBI-747776">
        <id>Q53EZ4</id>
        <label>CEP55</label>
    </interactant>
    <organismsDiffer>false</organismsDiffer>
    <experiments>3</experiments>
</comment>
<comment type="interaction">
    <interactant intactId="EBI-714158">
        <id>Q13526</id>
    </interactant>
    <interactant intactId="EBI-742887">
        <id>Q8TAP6</id>
        <label>CEP76</label>
    </interactant>
    <organismsDiffer>false</organismsDiffer>
    <experiments>6</experiments>
</comment>
<comment type="interaction">
    <interactant intactId="EBI-714158">
        <id>Q13526</id>
    </interactant>
    <interactant intactId="EBI-741671">
        <id>Q969H4</id>
        <label>CNKSR1</label>
    </interactant>
    <organismsDiffer>false</organismsDiffer>
    <experiments>6</experiments>
</comment>
<comment type="interaction">
    <interactant intactId="EBI-714158">
        <id>Q13526</id>
    </interactant>
    <interactant intactId="EBI-7875264">
        <id>O75553</id>
        <label>DAB1</label>
    </interactant>
    <organismsDiffer>false</organismsDiffer>
    <experiments>3</experiments>
</comment>
<comment type="interaction">
    <interactant intactId="EBI-714158">
        <id>Q13526</id>
    </interactant>
    <interactant intactId="EBI-12133006">
        <id>O75553-5</id>
        <label>DAB1</label>
    </interactant>
    <organismsDiffer>false</organismsDiffer>
    <experiments>3</experiments>
</comment>
<comment type="interaction">
    <interactant intactId="EBI-714158">
        <id>Q13526</id>
    </interactant>
    <interactant intactId="EBI-11974185">
        <id>Q494R4-2</id>
        <label>DRC12</label>
    </interactant>
    <organismsDiffer>false</organismsDiffer>
    <experiments>3</experiments>
</comment>
<comment type="interaction">
    <interactant intactId="EBI-714158">
        <id>Q13526</id>
    </interactant>
    <interactant intactId="EBI-448943">
        <id>Q16254</id>
        <label>E2F4</label>
    </interactant>
    <organismsDiffer>false</organismsDiffer>
    <experiments>3</experiments>
</comment>
<comment type="interaction">
    <interactant intactId="EBI-714158">
        <id>Q13526</id>
    </interactant>
    <interactant intactId="EBI-11525448">
        <id>O43281-2</id>
        <label>EFS</label>
    </interactant>
    <organismsDiffer>false</organismsDiffer>
    <experiments>3</experiments>
</comment>
<comment type="interaction">
    <interactant intactId="EBI-714158">
        <id>Q13526</id>
    </interactant>
    <interactant intactId="EBI-1372759">
        <id>P41212</id>
        <label>ETV6</label>
    </interactant>
    <organismsDiffer>false</organismsDiffer>
    <experiments>4</experiments>
</comment>
<comment type="interaction">
    <interactant intactId="EBI-714158">
        <id>Q13526</id>
    </interactant>
    <interactant intactId="EBI-12807776">
        <id>O00167-2</id>
        <label>EYA2</label>
    </interactant>
    <organismsDiffer>false</organismsDiffer>
    <experiments>3</experiments>
</comment>
<comment type="interaction">
    <interactant intactId="EBI-714158">
        <id>Q13526</id>
    </interactant>
    <interactant intactId="EBI-750641">
        <id>Q5TD97</id>
        <label>FHL5</label>
    </interactant>
    <organismsDiffer>false</organismsDiffer>
    <experiments>3</experiments>
</comment>
<comment type="interaction">
    <interactant intactId="EBI-714158">
        <id>Q13526</id>
    </interactant>
    <interactant intactId="EBI-852851">
        <id>P01100</id>
        <label>FOS</label>
    </interactant>
    <organismsDiffer>false</organismsDiffer>
    <experiments>3</experiments>
</comment>
<comment type="interaction">
    <interactant intactId="EBI-714158">
        <id>Q13526</id>
    </interactant>
    <interactant intactId="EBI-744510">
        <id>P15407</id>
        <label>FOSL1</label>
    </interactant>
    <organismsDiffer>false</organismsDiffer>
    <experiments>3</experiments>
</comment>
<comment type="interaction">
    <interactant intactId="EBI-714158">
        <id>Q13526</id>
    </interactant>
    <interactant intactId="EBI-12018822">
        <id>Q12951-2</id>
        <label>FOXI1</label>
    </interactant>
    <organismsDiffer>false</organismsDiffer>
    <experiments>3</experiments>
</comment>
<comment type="interaction">
    <interactant intactId="EBI-714158">
        <id>Q13526</id>
    </interactant>
    <interactant intactId="EBI-11319000">
        <id>O15353</id>
        <label>FOXN1</label>
    </interactant>
    <organismsDiffer>false</organismsDiffer>
    <experiments>3</experiments>
</comment>
<comment type="interaction">
    <interactant intactId="EBI-714158">
        <id>Q13526</id>
    </interactant>
    <interactant intactId="EBI-983612">
        <id>O15409</id>
        <label>FOXP2</label>
    </interactant>
    <organismsDiffer>false</organismsDiffer>
    <experiments>6</experiments>
</comment>
<comment type="interaction">
    <interactant intactId="EBI-714158">
        <id>Q13526</id>
    </interactant>
    <interactant intactId="EBI-9050116">
        <id>Q9BTY2</id>
        <label>FUCA2</label>
    </interactant>
    <organismsDiffer>false</organismsDiffer>
    <experiments>3</experiments>
</comment>
<comment type="interaction">
    <interactant intactId="EBI-714158">
        <id>Q13526</id>
    </interactant>
    <interactant intactId="EBI-308084">
        <id>P08151</id>
        <label>GLI1</label>
    </interactant>
    <organismsDiffer>false</organismsDiffer>
    <experiments>3</experiments>
</comment>
<comment type="interaction">
    <interactant intactId="EBI-714158">
        <id>Q13526</id>
    </interactant>
    <interactant intactId="EBI-948296">
        <id>Q9UKD1</id>
        <label>GMEB2</label>
    </interactant>
    <organismsDiffer>false</organismsDiffer>
    <experiments>3</experiments>
</comment>
<comment type="interaction">
    <interactant intactId="EBI-714158">
        <id>Q13526</id>
    </interactant>
    <interactant intactId="EBI-618309">
        <id>Q08379</id>
        <label>GOLGA2</label>
    </interactant>
    <organismsDiffer>false</organismsDiffer>
    <experiments>6</experiments>
</comment>
<comment type="interaction">
    <interactant intactId="EBI-714158">
        <id>Q13526</id>
    </interactant>
    <interactant intactId="EBI-5916454">
        <id>A6NEM1</id>
        <label>GOLGA6L9</label>
    </interactant>
    <organismsDiffer>false</organismsDiffer>
    <experiments>3</experiments>
</comment>
<comment type="interaction">
    <interactant intactId="EBI-714158">
        <id>Q13526</id>
    </interactant>
    <interactant intactId="EBI-13345167">
        <id>Q8TDT2</id>
        <label>GPR152</label>
    </interactant>
    <organismsDiffer>false</organismsDiffer>
    <experiments>3</experiments>
</comment>
<comment type="interaction">
    <interactant intactId="EBI-714158">
        <id>Q13526</id>
    </interactant>
    <interactant intactId="EBI-5460660">
        <id>Q96MH2</id>
        <label>HEXIM2</label>
    </interactant>
    <organismsDiffer>false</organismsDiffer>
    <experiments>6</experiments>
</comment>
<comment type="interaction">
    <interactant intactId="EBI-714158">
        <id>Q13526</id>
    </interactant>
    <interactant intactId="EBI-10172004">
        <id>Q8IX15-3</id>
        <label>HOMEZ</label>
    </interactant>
    <organismsDiffer>false</organismsDiffer>
    <experiments>3</experiments>
</comment>
<comment type="interaction">
    <interactant intactId="EBI-714158">
        <id>Q13526</id>
    </interactant>
    <interactant intactId="EBI-740785">
        <id>P49639</id>
        <label>HOXA1</label>
    </interactant>
    <organismsDiffer>false</organismsDiffer>
    <experiments>5</experiments>
</comment>
<comment type="interaction">
    <interactant intactId="EBI-714158">
        <id>Q13526</id>
    </interactant>
    <interactant intactId="EBI-745305">
        <id>Q13422</id>
        <label>IKZF1</label>
    </interactant>
    <organismsDiffer>false</organismsDiffer>
    <experiments>3</experiments>
</comment>
<comment type="interaction">
    <interactant intactId="EBI-714158">
        <id>Q13526</id>
    </interactant>
    <interactant intactId="EBI-11522367">
        <id>Q13422-7</id>
        <label>IKZF1</label>
    </interactant>
    <organismsDiffer>false</organismsDiffer>
    <experiments>3</experiments>
</comment>
<comment type="interaction">
    <interactant intactId="EBI-714158">
        <id>Q13526</id>
    </interactant>
    <interactant intactId="EBI-747204">
        <id>Q9UKT9</id>
        <label>IKZF3</label>
    </interactant>
    <organismsDiffer>false</organismsDiffer>
    <experiments>8</experiments>
</comment>
<comment type="interaction">
    <interactant intactId="EBI-714158">
        <id>Q13526</id>
    </interactant>
    <interactant intactId="EBI-769401">
        <id>Q8NBZ0</id>
        <label>INO80E</label>
    </interactant>
    <organismsDiffer>false</organismsDiffer>
    <experiments>3</experiments>
</comment>
<comment type="interaction">
    <interactant intactId="EBI-714158">
        <id>Q13526</id>
    </interactant>
    <interactant intactId="EBI-358664">
        <id>P51617</id>
        <label>IRAK1</label>
    </interactant>
    <organismsDiffer>false</organismsDiffer>
    <experiments>10</experiments>
</comment>
<comment type="interaction">
    <interactant intactId="EBI-714158">
        <id>Q13526</id>
    </interactant>
    <interactant intactId="EBI-752007">
        <id>Q96AA8</id>
        <label>JAKMIP2</label>
    </interactant>
    <organismsDiffer>false</organismsDiffer>
    <experiments>4</experiments>
</comment>
<comment type="interaction">
    <interactant intactId="EBI-714158">
        <id>Q13526</id>
    </interactant>
    <interactant intactId="EBI-11954971">
        <id>Q96MP8-2</id>
        <label>KCTD7</label>
    </interactant>
    <organismsDiffer>false</organismsDiffer>
    <experiments>3</experiments>
</comment>
<comment type="interaction">
    <interactant intactId="EBI-714158">
        <id>Q13526</id>
    </interactant>
    <interactant intactId="EBI-14069005">
        <id>Q9BVG8-5</id>
        <label>KIFC3</label>
    </interactant>
    <organismsDiffer>false</organismsDiffer>
    <experiments>3</experiments>
</comment>
<comment type="interaction">
    <interactant intactId="EBI-714158">
        <id>Q13526</id>
    </interactant>
    <interactant intactId="EBI-948001">
        <id>Q15323</id>
        <label>KRT31</label>
    </interactant>
    <organismsDiffer>false</organismsDiffer>
    <experiments>6</experiments>
</comment>
<comment type="interaction">
    <interactant intactId="EBI-714158">
        <id>Q13526</id>
    </interactant>
    <interactant intactId="EBI-1047093">
        <id>O76011</id>
        <label>KRT34</label>
    </interactant>
    <organismsDiffer>false</organismsDiffer>
    <experiments>3</experiments>
</comment>
<comment type="interaction">
    <interactant intactId="EBI-714158">
        <id>Q13526</id>
    </interactant>
    <interactant intactId="EBI-1045716">
        <id>O76014</id>
        <label>KRT37</label>
    </interactant>
    <organismsDiffer>false</organismsDiffer>
    <experiments>3</experiments>
</comment>
<comment type="interaction">
    <interactant intactId="EBI-714158">
        <id>Q13526</id>
    </interactant>
    <interactant intactId="EBI-1047263">
        <id>O76015</id>
        <label>KRT38</label>
    </interactant>
    <organismsDiffer>false</organismsDiffer>
    <experiments>6</experiments>
</comment>
<comment type="interaction">
    <interactant intactId="EBI-714158">
        <id>Q13526</id>
    </interactant>
    <interactant intactId="EBI-10171697">
        <id>Q6A162</id>
        <label>KRT40</label>
    </interactant>
    <organismsDiffer>false</organismsDiffer>
    <experiments>3</experiments>
</comment>
<comment type="interaction">
    <interactant intactId="EBI-714158">
        <id>Q13526</id>
    </interactant>
    <interactant intactId="EBI-12012928">
        <id>P60371</id>
        <label>KRTAP10-6</label>
    </interactant>
    <organismsDiffer>false</organismsDiffer>
    <experiments>3</experiments>
</comment>
<comment type="interaction">
    <interactant intactId="EBI-714158">
        <id>Q13526</id>
    </interactant>
    <interactant intactId="EBI-10172290">
        <id>P60409</id>
        <label>KRTAP10-7</label>
    </interactant>
    <organismsDiffer>false</organismsDiffer>
    <experiments>6</experiments>
</comment>
<comment type="interaction">
    <interactant intactId="EBI-714158">
        <id>Q13526</id>
    </interactant>
    <interactant intactId="EBI-10171774">
        <id>P60410</id>
        <label>KRTAP10-8</label>
    </interactant>
    <organismsDiffer>false</organismsDiffer>
    <experiments>3</experiments>
</comment>
<comment type="interaction">
    <interactant intactId="EBI-714158">
        <id>Q13526</id>
    </interactant>
    <interactant intactId="EBI-10172052">
        <id>P60411</id>
        <label>KRTAP10-9</label>
    </interactant>
    <organismsDiffer>false</organismsDiffer>
    <experiments>3</experiments>
</comment>
<comment type="interaction">
    <interactant intactId="EBI-714158">
        <id>Q13526</id>
    </interactant>
    <interactant intactId="EBI-10172511">
        <id>Q9BYR5</id>
        <label>KRTAP4-2</label>
    </interactant>
    <organismsDiffer>false</organismsDiffer>
    <experiments>3</experiments>
</comment>
<comment type="interaction">
    <interactant intactId="EBI-714158">
        <id>Q13526</id>
    </interactant>
    <interactant intactId="EBI-3958099">
        <id>P26371</id>
        <label>KRTAP5-9</label>
    </interactant>
    <organismsDiffer>false</organismsDiffer>
    <experiments>3</experiments>
</comment>
<comment type="interaction">
    <interactant intactId="EBI-714158">
        <id>Q13526</id>
    </interactant>
    <interactant intactId="EBI-11911016">
        <id>P80188</id>
        <label>LCN2</label>
    </interactant>
    <organismsDiffer>false</organismsDiffer>
    <experiments>3</experiments>
</comment>
<comment type="interaction">
    <interactant intactId="EBI-714158">
        <id>Q13526</id>
    </interactant>
    <interactant intactId="EBI-492564">
        <id>Q02750</id>
        <label>MAP2K1</label>
    </interactant>
    <organismsDiffer>false</organismsDiffer>
    <experiments>5</experiments>
</comment>
<comment type="interaction">
    <interactant intactId="EBI-714158">
        <id>Q13526</id>
    </interactant>
    <interactant intactId="EBI-354900">
        <id>P41279</id>
        <label>MAP3K8</label>
    </interactant>
    <organismsDiffer>false</organismsDiffer>
    <experiments>8</experiments>
</comment>
<comment type="interaction">
    <interactant intactId="EBI-714158">
        <id>Q13526</id>
    </interactant>
    <interactant intactId="EBI-724076">
        <id>Q99750</id>
        <label>MDFI</label>
    </interactant>
    <organismsDiffer>false</organismsDiffer>
    <experiments>7</experiments>
</comment>
<comment type="interaction">
    <interactant intactId="EBI-714158">
        <id>Q13526</id>
    </interactant>
    <interactant intactId="EBI-2864512">
        <id>P50221</id>
        <label>MEOX1</label>
    </interactant>
    <organismsDiffer>false</organismsDiffer>
    <experiments>3</experiments>
</comment>
<comment type="interaction">
    <interactant intactId="EBI-714158">
        <id>Q13526</id>
    </interactant>
    <interactant intactId="EBI-748397">
        <id>P50222</id>
        <label>MEOX2</label>
    </interactant>
    <organismsDiffer>false</organismsDiffer>
    <experiments>3</experiments>
</comment>
<comment type="interaction">
    <interactant intactId="EBI-714158">
        <id>Q13526</id>
    </interactant>
    <interactant intactId="EBI-16439278">
        <id>Q6FHY5</id>
        <label>MEOX2</label>
    </interactant>
    <organismsDiffer>false</organismsDiffer>
    <experiments>3</experiments>
</comment>
<comment type="interaction">
    <interactant intactId="EBI-714158">
        <id>Q13526</id>
    </interactant>
    <interactant intactId="EBI-740216">
        <id>P55198</id>
        <label>MLLT6</label>
    </interactant>
    <organismsDiffer>false</organismsDiffer>
    <experiments>3</experiments>
</comment>
<comment type="interaction">
    <interactant intactId="EBI-714158">
        <id>Q13526</id>
    </interactant>
    <interactant intactId="EBI-742948">
        <id>Q5JR59</id>
        <label>MTUS2</label>
    </interactant>
    <organismsDiffer>false</organismsDiffer>
    <experiments>3</experiments>
</comment>
<comment type="interaction">
    <interactant intactId="EBI-714158">
        <id>Q13526</id>
    </interactant>
    <interactant intactId="EBI-11522433">
        <id>Q5JR59-3</id>
        <label>MTUS2</label>
    </interactant>
    <organismsDiffer>false</organismsDiffer>
    <experiments>3</experiments>
</comment>
<comment type="interaction">
    <interactant intactId="EBI-714158">
        <id>Q13526</id>
    </interactant>
    <interactant intactId="EBI-447544">
        <id>P01106</id>
        <label>MYC</label>
    </interactant>
    <organismsDiffer>false</organismsDiffer>
    <experiments>5</experiments>
</comment>
<comment type="interaction">
    <interactant intactId="EBI-714158">
        <id>Q13526</id>
    </interactant>
    <interactant intactId="EBI-17491620">
        <id>P13349</id>
        <label>MYF5</label>
    </interactant>
    <organismsDiffer>false</organismsDiffer>
    <experiments>3</experiments>
</comment>
<comment type="interaction">
    <interactant intactId="EBI-714158">
        <id>Q13526</id>
    </interactant>
    <interactant intactId="EBI-8641936">
        <id>Q15742</id>
        <label>NAB2</label>
    </interactant>
    <organismsDiffer>false</organismsDiffer>
    <experiments>6</experiments>
</comment>
<comment type="interaction">
    <interactant intactId="EBI-714158">
        <id>Q13526</id>
    </interactant>
    <interactant intactId="EBI-10963850">
        <id>Q9NZQ3-3</id>
        <label>NCKIPSD</label>
    </interactant>
    <organismsDiffer>false</organismsDiffer>
    <experiments>3</experiments>
</comment>
<comment type="interaction">
    <interactant intactId="EBI-714158">
        <id>Q13526</id>
    </interactant>
    <interactant intactId="EBI-740364">
        <id>Q9HC98</id>
        <label>NEK6</label>
    </interactant>
    <organismsDiffer>false</organismsDiffer>
    <experiments>3</experiments>
</comment>
<comment type="interaction">
    <interactant intactId="EBI-714158">
        <id>Q13526</id>
    </interactant>
    <interactant intactId="EBI-5461341">
        <id>Q9H3P2</id>
        <label>NELFA</label>
    </interactant>
    <organismsDiffer>false</organismsDiffer>
    <experiments>3</experiments>
</comment>
<comment type="interaction">
    <interactant intactId="EBI-714158">
        <id>Q13526</id>
    </interactant>
    <interactant intactId="EBI-3917781">
        <id>Q9HD90</id>
        <label>NEUROD4</label>
    </interactant>
    <organismsDiffer>false</organismsDiffer>
    <experiments>3</experiments>
</comment>
<comment type="interaction">
    <interactant intactId="EBI-714158">
        <id>Q13526</id>
    </interactant>
    <interactant intactId="EBI-2007911">
        <id>Q16236</id>
        <label>NFE2L2</label>
    </interactant>
    <organismsDiffer>false</organismsDiffer>
    <experiments>5</experiments>
</comment>
<comment type="interaction">
    <interactant intactId="EBI-714158">
        <id>Q13526</id>
    </interactant>
    <interactant intactId="EBI-350527">
        <id>Q15233</id>
        <label>NONO</label>
    </interactant>
    <organismsDiffer>false</organismsDiffer>
    <experiments>4</experiments>
</comment>
<comment type="interaction">
    <interactant intactId="EBI-714158">
        <id>Q13526</id>
    </interactant>
    <interactant intactId="EBI-10203843">
        <id>Q15233-2</id>
        <label>NONO</label>
    </interactant>
    <organismsDiffer>false</organismsDiffer>
    <experiments>3</experiments>
</comment>
<comment type="interaction">
    <interactant intactId="EBI-714158">
        <id>Q13526</id>
    </interactant>
    <interactant intactId="EBI-636374">
        <id>P46531</id>
        <label>NOTCH1</label>
    </interactant>
    <organismsDiffer>false</organismsDiffer>
    <experiments>14</experiments>
</comment>
<comment type="interaction">
    <interactant intactId="EBI-714158">
        <id>Q13526</id>
    </interactant>
    <interactant intactId="EBI-13644623">
        <id>Q92570</id>
        <label>NR4A3</label>
    </interactant>
    <organismsDiffer>false</organismsDiffer>
    <experiments>3</experiments>
</comment>
<comment type="interaction">
    <interactant intactId="EBI-714158">
        <id>Q13526</id>
    </interactant>
    <interactant intactId="EBI-9050429">
        <id>Q8NFH5</id>
        <label>NUP35</label>
    </interactant>
    <organismsDiffer>false</organismsDiffer>
    <experiments>5</experiments>
</comment>
<comment type="interaction">
    <interactant intactId="EBI-714158">
        <id>Q13526</id>
    </interactant>
    <interactant intactId="EBI-347978">
        <id>P37198</id>
        <label>NUP62</label>
    </interactant>
    <organismsDiffer>false</organismsDiffer>
    <experiments>6</experiments>
</comment>
<comment type="interaction">
    <interactant intactId="EBI-714158">
        <id>Q13526</id>
    </interactant>
    <interactant intactId="EBI-747278">
        <id>P26367</id>
        <label>PAX6</label>
    </interactant>
    <organismsDiffer>false</organismsDiffer>
    <experiments>3</experiments>
</comment>
<comment type="interaction">
    <interactant intactId="EBI-714158">
        <id>Q13526</id>
    </interactant>
    <interactant intactId="EBI-301611">
        <id>P40424</id>
        <label>PBX1</label>
    </interactant>
    <organismsDiffer>false</organismsDiffer>
    <experiments>3</experiments>
</comment>
<comment type="interaction">
    <interactant intactId="EBI-714158">
        <id>Q13526</id>
    </interactant>
    <interactant intactId="EBI-350517">
        <id>Q9NR12</id>
        <label>PDLIM7</label>
    </interactant>
    <organismsDiffer>false</organismsDiffer>
    <experiments>3</experiments>
</comment>
<comment type="interaction">
    <interactant intactId="EBI-714158">
        <id>Q13526</id>
    </interactant>
    <interactant intactId="EBI-2876622">
        <id>Q9UPG8</id>
        <label>PLAGL2</label>
    </interactant>
    <organismsDiffer>false</organismsDiffer>
    <experiments>3</experiments>
</comment>
<comment type="interaction">
    <interactant intactId="EBI-714158">
        <id>Q13526</id>
    </interactant>
    <interactant intactId="EBI-2797213">
        <id>Q9H7P9</id>
        <label>PLEKHG2</label>
    </interactant>
    <organismsDiffer>false</organismsDiffer>
    <experiments>3</experiments>
</comment>
<comment type="interaction">
    <interactant intactId="EBI-714158">
        <id>Q13526</id>
    </interactant>
    <interactant intactId="EBI-302345">
        <id>Q8ND90</id>
        <label>PNMA1</label>
    </interactant>
    <organismsDiffer>false</organismsDiffer>
    <experiments>3</experiments>
</comment>
<comment type="interaction">
    <interactant intactId="EBI-714158">
        <id>Q13526</id>
    </interactant>
    <interactant intactId="EBI-2560879">
        <id>Q96M27</id>
        <label>PRRC1</label>
    </interactant>
    <organismsDiffer>false</organismsDiffer>
    <experiments>3</experiments>
</comment>
<comment type="interaction">
    <interactant intactId="EBI-714158">
        <id>Q13526</id>
    </interactant>
    <interactant intactId="EBI-365996">
        <id>P04049</id>
        <label>RAF1</label>
    </interactant>
    <organismsDiffer>false</organismsDiffer>
    <experiments>2</experiments>
</comment>
<comment type="interaction">
    <interactant intactId="EBI-714158">
        <id>Q13526</id>
    </interactant>
    <interactant intactId="EBI-743815">
        <id>Q7Z5J4</id>
        <label>RAI1</label>
    </interactant>
    <organismsDiffer>false</organismsDiffer>
    <experiments>4</experiments>
</comment>
<comment type="interaction">
    <interactant intactId="EBI-714158">
        <id>Q13526</id>
    </interactant>
    <interactant intactId="EBI-10203615">
        <id>Q99708-2</id>
        <label>RBBP8</label>
    </interactant>
    <organismsDiffer>false</organismsDiffer>
    <experiments>3</experiments>
</comment>
<comment type="interaction">
    <interactant intactId="EBI-714158">
        <id>Q13526</id>
    </interactant>
    <interactant intactId="EBI-11322432">
        <id>Q8NC74</id>
        <label>RBBP8NL</label>
    </interactant>
    <organismsDiffer>false</organismsDiffer>
    <experiments>3</experiments>
</comment>
<comment type="interaction">
    <interactant intactId="EBI-714158">
        <id>Q13526</id>
    </interactant>
    <interactant intactId="EBI-740322">
        <id>Q93062</id>
        <label>RBPMS</label>
    </interactant>
    <organismsDiffer>false</organismsDiffer>
    <experiments>4</experiments>
</comment>
<comment type="interaction">
    <interactant intactId="EBI-714158">
        <id>Q13526</id>
    </interactant>
    <interactant intactId="EBI-751555">
        <id>Q9H0X6</id>
        <label>RNF208</label>
    </interactant>
    <organismsDiffer>false</organismsDiffer>
    <experiments>3</experiments>
</comment>
<comment type="interaction">
    <interactant intactId="EBI-714158">
        <id>Q13526</id>
    </interactant>
    <interactant intactId="EBI-976402">
        <id>Q13950</id>
        <label>RUNX2</label>
    </interactant>
    <organismsDiffer>false</organismsDiffer>
    <experiments>7</experiments>
</comment>
<comment type="interaction">
    <interactant intactId="EBI-714158">
        <id>Q13526</id>
    </interactant>
    <interactant intactId="EBI-4395514">
        <id>Q8N9R8</id>
        <label>SCAI</label>
    </interactant>
    <organismsDiffer>false</organismsDiffer>
    <experiments>3</experiments>
</comment>
<comment type="interaction">
    <interactant intactId="EBI-714158">
        <id>Q13526</id>
    </interactant>
    <interactant intactId="EBI-12023020">
        <id>Q96KG9-4</id>
        <label>SCYL1</label>
    </interactant>
    <organismsDiffer>false</organismsDiffer>
    <experiments>3</experiments>
</comment>
<comment type="interaction">
    <interactant intactId="EBI-714158">
        <id>Q13526</id>
    </interactant>
    <interactant intactId="EBI-10216195">
        <id>P59797</id>
        <label>SELENOV</label>
    </interactant>
    <organismsDiffer>false</organismsDiffer>
    <experiments>3</experiments>
</comment>
<comment type="interaction">
    <interactant intactId="EBI-714158">
        <id>Q13526</id>
    </interactant>
    <interactant intactId="EBI-2865100">
        <id>Q13342</id>
        <label>SP140</label>
    </interactant>
    <organismsDiffer>false</organismsDiffer>
    <experiments>4</experiments>
</comment>
<comment type="interaction">
    <interactant intactId="EBI-714158">
        <id>Q13526</id>
    </interactant>
    <interactant intactId="EBI-2902395">
        <id>Q9BWW4</id>
        <label>SSBP3</label>
    </interactant>
    <organismsDiffer>false</organismsDiffer>
    <experiments>6</experiments>
</comment>
<comment type="interaction">
    <interactant intactId="EBI-714158">
        <id>Q13526</id>
    </interactant>
    <interactant intactId="EBI-744719">
        <id>Q9BWG4</id>
        <label>SSBP4</label>
    </interactant>
    <organismsDiffer>false</organismsDiffer>
    <experiments>4</experiments>
</comment>
<comment type="interaction">
    <interactant intactId="EBI-714158">
        <id>Q13526</id>
    </interactant>
    <interactant intactId="EBI-10172867">
        <id>A1L4H1</id>
        <label>SSC5D</label>
    </interactant>
    <organismsDiffer>false</organismsDiffer>
    <experiments>3</experiments>
</comment>
<comment type="interaction">
    <interactant intactId="EBI-714158">
        <id>Q13526</id>
    </interactant>
    <interactant intactId="EBI-6690555">
        <id>Q9BR01</id>
        <label>SULT4A1</label>
    </interactant>
    <organismsDiffer>false</organismsDiffer>
    <experiments>4</experiments>
</comment>
<comment type="interaction">
    <interactant intactId="EBI-714158">
        <id>Q13526</id>
    </interactant>
    <interactant intactId="EBI-710464">
        <id>O00267</id>
        <label>SUPT5H</label>
    </interactant>
    <organismsDiffer>false</organismsDiffer>
    <experiments>4</experiments>
</comment>
<comment type="interaction">
    <interactant intactId="EBI-714158">
        <id>Q13526</id>
    </interactant>
    <interactant intactId="EBI-10770179">
        <id>Q96A49</id>
        <label>SYAP1</label>
    </interactant>
    <organismsDiffer>false</organismsDiffer>
    <experiments>3</experiments>
</comment>
<comment type="interaction">
    <interactant intactId="EBI-714158">
        <id>Q13526</id>
    </interactant>
    <interactant intactId="EBI-359964">
        <id>Q8N5C8</id>
        <label>TAB3</label>
    </interactant>
    <organismsDiffer>false</organismsDiffer>
    <experiments>3</experiments>
</comment>
<comment type="interaction">
    <interactant intactId="EBI-714158">
        <id>Q13526</id>
    </interactant>
    <interactant intactId="EBI-11952764">
        <id>Q99081-3</id>
        <label>TCF12</label>
    </interactant>
    <organismsDiffer>false</organismsDiffer>
    <experiments>3</experiments>
</comment>
<comment type="interaction">
    <interactant intactId="EBI-714158">
        <id>Q13526</id>
    </interactant>
    <interactant intactId="EBI-533224">
        <id>P15884</id>
        <label>TCF4</label>
    </interactant>
    <organismsDiffer>false</organismsDiffer>
    <experiments>3</experiments>
</comment>
<comment type="interaction">
    <interactant intactId="EBI-714158">
        <id>Q13526</id>
    </interactant>
    <interactant intactId="EBI-1245626">
        <id>P0C1Z6</id>
        <label>TFPT</label>
    </interactant>
    <organismsDiffer>false</organismsDiffer>
    <experiments>3</experiments>
</comment>
<comment type="interaction">
    <interactant intactId="EBI-714158">
        <id>Q13526</id>
    </interactant>
    <interactant intactId="EBI-741350">
        <id>Q9BT49</id>
        <label>THAP7</label>
    </interactant>
    <organismsDiffer>false</organismsDiffer>
    <experiments>5</experiments>
</comment>
<comment type="interaction">
    <interactant intactId="EBI-714158">
        <id>Q13526</id>
    </interactant>
    <interactant intactId="EBI-357849">
        <id>Q15025</id>
        <label>TNIP1</label>
    </interactant>
    <organismsDiffer>false</organismsDiffer>
    <experiments>7</experiments>
</comment>
<comment type="interaction">
    <interactant intactId="EBI-714158">
        <id>Q13526</id>
    </interactant>
    <interactant intactId="EBI-949753">
        <id>Q63HR2</id>
        <label>TNS2</label>
    </interactant>
    <organismsDiffer>false</organismsDiffer>
    <experiments>3</experiments>
</comment>
<comment type="interaction">
    <interactant intactId="EBI-714158">
        <id>Q13526</id>
    </interactant>
    <interactant intactId="EBI-366083">
        <id>P04637</id>
        <label>TP53</label>
    </interactant>
    <organismsDiffer>false</organismsDiffer>
    <experiments>12</experiments>
</comment>
<comment type="interaction">
    <interactant intactId="EBI-714158">
        <id>Q13526</id>
    </interactant>
    <interactant intactId="EBI-2337775">
        <id>Q9H3D4</id>
        <label>TP63</label>
    </interactant>
    <organismsDiffer>false</organismsDiffer>
    <experiments>3</experiments>
</comment>
<comment type="interaction">
    <interactant intactId="EBI-714158">
        <id>Q13526</id>
    </interactant>
    <interactant intactId="EBI-359224">
        <id>Q13077</id>
        <label>TRAF1</label>
    </interactant>
    <organismsDiffer>false</organismsDiffer>
    <experiments>3</experiments>
</comment>
<comment type="interaction">
    <interactant intactId="EBI-714158">
        <id>Q13526</id>
    </interactant>
    <interactant intactId="EBI-355744">
        <id>Q12933</id>
        <label>TRAF2</label>
    </interactant>
    <organismsDiffer>false</organismsDiffer>
    <experiments>7</experiments>
</comment>
<comment type="interaction">
    <interactant intactId="EBI-714158">
        <id>Q13526</id>
    </interactant>
    <interactant intactId="EBI-719493">
        <id>P14373</id>
        <label>TRIM27</label>
    </interactant>
    <organismsDiffer>false</organismsDiffer>
    <experiments>3</experiments>
</comment>
<comment type="interaction">
    <interactant intactId="EBI-714158">
        <id>Q13526</id>
    </interactant>
    <interactant intactId="EBI-742327">
        <id>Q15654</id>
        <label>TRIP6</label>
    </interactant>
    <organismsDiffer>false</organismsDiffer>
    <experiments>3</experiments>
</comment>
<comment type="interaction">
    <interactant intactId="EBI-714158">
        <id>Q13526</id>
    </interactant>
    <interactant intactId="EBI-739485">
        <id>Q9Y3Q8</id>
        <label>TSC22D4</label>
    </interactant>
    <organismsDiffer>false</organismsDiffer>
    <experiments>7</experiments>
</comment>
<comment type="interaction">
    <interactant intactId="EBI-714158">
        <id>Q13526</id>
    </interactant>
    <interactant intactId="EBI-947187">
        <id>Q9UHD9</id>
        <label>UBQLN2</label>
    </interactant>
    <organismsDiffer>false</organismsDiffer>
    <experiments>5</experiments>
</comment>
<comment type="interaction">
    <interactant intactId="EBI-714158">
        <id>Q13526</id>
    </interactant>
    <interactant intactId="EBI-1993619">
        <id>Q14CS0</id>
        <label>UBXN2B</label>
    </interactant>
    <organismsDiffer>false</organismsDiffer>
    <experiments>3</experiments>
</comment>
<comment type="interaction">
    <interactant intactId="EBI-714158">
        <id>Q13526</id>
    </interactant>
    <interactant intactId="EBI-10176632">
        <id>O43829</id>
        <label>ZBTB14</label>
    </interactant>
    <organismsDiffer>false</organismsDiffer>
    <experiments>3</experiments>
</comment>
<comment type="interaction">
    <interactant intactId="EBI-714158">
        <id>Q13526</id>
    </interactant>
    <interactant intactId="EBI-2515601">
        <id>Q8N680</id>
        <label>ZBTB2</label>
    </interactant>
    <organismsDiffer>false</organismsDiffer>
    <experiments>3</experiments>
</comment>
<comment type="interaction">
    <interactant intactId="EBI-714158">
        <id>Q13526</id>
    </interactant>
    <interactant intactId="EBI-723574">
        <id>O15209</id>
        <label>ZBTB22</label>
    </interactant>
    <organismsDiffer>false</organismsDiffer>
    <experiments>3</experiments>
</comment>
<comment type="interaction">
    <interactant intactId="EBI-714158">
        <id>Q13526</id>
    </interactant>
    <interactant intactId="EBI-12287587">
        <id>B2RXF5</id>
        <label>ZBTB42</label>
    </interactant>
    <organismsDiffer>false</organismsDiffer>
    <experiments>3</experiments>
</comment>
<comment type="interaction">
    <interactant intactId="EBI-714158">
        <id>Q13526</id>
    </interactant>
    <interactant intactId="EBI-740434">
        <id>O15156</id>
        <label>ZBTB7B</label>
    </interactant>
    <organismsDiffer>false</organismsDiffer>
    <experiments>3</experiments>
</comment>
<comment type="interaction">
    <interactant intactId="EBI-714158">
        <id>Q13526</id>
    </interactant>
    <interactant intactId="EBI-395708">
        <id>Q96C00</id>
        <label>ZBTB9</label>
    </interactant>
    <organismsDiffer>false</organismsDiffer>
    <experiments>6</experiments>
</comment>
<comment type="interaction">
    <interactant intactId="EBI-714158">
        <id>Q13526</id>
    </interactant>
    <interactant intactId="EBI-745786">
        <id>Q8NF64</id>
        <label>ZMIZ2</label>
    </interactant>
    <organismsDiffer>false</organismsDiffer>
    <experiments>4</experiments>
</comment>
<comment type="interaction">
    <interactant intactId="EBI-714158">
        <id>Q13526</id>
    </interactant>
    <interactant intactId="EBI-10182121">
        <id>Q8NF64-2</id>
        <label>ZMIZ2</label>
    </interactant>
    <organismsDiffer>false</organismsDiffer>
    <experiments>3</experiments>
</comment>
<comment type="interaction">
    <interactant intactId="EBI-714158">
        <id>Q13526</id>
    </interactant>
    <interactant intactId="EBI-12011330">
        <id>Q8NF64-3</id>
        <label>ZMIZ2</label>
    </interactant>
    <organismsDiffer>false</organismsDiffer>
    <experiments>3</experiments>
</comment>
<comment type="interaction">
    <interactant intactId="EBI-714158">
        <id>Q13526</id>
    </interactant>
    <interactant intactId="EBI-740232">
        <id>Q9NWS9-2</id>
        <label>ZNF446</label>
    </interactant>
    <organismsDiffer>false</organismsDiffer>
    <experiments>6</experiments>
</comment>
<comment type="interaction">
    <interactant intactId="EBI-714158">
        <id>Q13526</id>
    </interactant>
    <interactant intactId="EBI-10215956">
        <id>Q6P9G9</id>
        <label>ZNF449</label>
    </interactant>
    <organismsDiffer>false</organismsDiffer>
    <experiments>3</experiments>
</comment>
<comment type="interaction">
    <interactant intactId="EBI-714158">
        <id>Q13526</id>
    </interactant>
    <interactant intactId="EBI-11035148">
        <id>Q8TF50</id>
        <label>ZNF526</label>
    </interactant>
    <organismsDiffer>false</organismsDiffer>
    <experiments>3</experiments>
</comment>
<comment type="interaction">
    <interactant intactId="EBI-714158">
        <id>Q13526</id>
    </interactant>
    <interactant intactId="EBI-1210580">
        <id>Q9H5H4</id>
        <label>ZNF768</label>
    </interactant>
    <organismsDiffer>false</organismsDiffer>
    <experiments>5</experiments>
</comment>
<comment type="interaction">
    <interactant intactId="EBI-714158">
        <id>Q13526</id>
    </interactant>
    <interactant intactId="EBI-17789949">
        <id>Q6ZMS7-2</id>
        <label>ZNF783</label>
    </interactant>
    <organismsDiffer>false</organismsDiffer>
    <experiments>3</experiments>
</comment>
<comment type="interaction">
    <interactant intactId="EBI-714158">
        <id>Q13526</id>
    </interactant>
    <interactant intactId="EBI-12903728">
        <id>A0A384NQ31</id>
    </interactant>
    <organismsDiffer>false</organismsDiffer>
    <experiments>3</experiments>
</comment>
<comment type="interaction">
    <interactant intactId="EBI-714158">
        <id>Q13526</id>
    </interactant>
    <interactant intactId="EBI-8830305">
        <id>P31424-2</id>
        <label>Grm5</label>
    </interactant>
    <organismsDiffer>true</organismsDiffer>
    <experiments>3</experiments>
</comment>
<comment type="interaction">
    <interactant intactId="EBI-714158">
        <id>Q13526</id>
    </interactant>
    <interactant intactId="EBI-8795045">
        <id>Q3UVX5</id>
        <label>Grm5</label>
    </interactant>
    <organismsDiffer>true</organismsDiffer>
    <experiments>2</experiments>
</comment>
<comment type="interaction">
    <interactant intactId="EBI-714158">
        <id>Q13526</id>
    </interactant>
    <interactant intactId="EBI-298860">
        <id>P31938</id>
        <label>Map2k1</label>
    </interactant>
    <organismsDiffer>true</organismsDiffer>
    <experiments>4</experiments>
</comment>
<comment type="interaction">
    <interactant intactId="EBI-714158">
        <id>Q13526</id>
    </interactant>
    <interactant intactId="EBI-397724">
        <id>Q63932</id>
        <label>Map2k2</label>
    </interactant>
    <organismsDiffer>true</organismsDiffer>
    <experiments>12</experiments>
</comment>
<comment type="interaction">
    <interactant intactId="EBI-714158">
        <id>Q13526</id>
    </interactant>
    <interactant intactId="EBI-15699014">
        <id>Q80Z64-1</id>
        <label>Nanog</label>
    </interactant>
    <organismsDiffer>true</organismsDiffer>
    <experiments>2</experiments>
</comment>
<comment type="subcellular location">
    <subcellularLocation>
        <location evidence="7 15">Nucleus</location>
    </subcellularLocation>
    <subcellularLocation>
        <location evidence="12">Nucleus speckle</location>
    </subcellularLocation>
    <subcellularLocation>
        <location evidence="12">Cytoplasm</location>
    </subcellularLocation>
    <text evidence="7">Colocalizes with NEK6 in the nucleus (PubMed:16476580). Mainly localized in the nucleus but phosphorylation at Ser-71 by DAPK1 results in inhibition of its nuclear localization (PubMed:21497122).</text>
</comment>
<comment type="tissue specificity">
    <text evidence="9 12 18">Expressed in immune cells in the lung (at protein level) (PubMed:29686383). The phosphorylated form at Ser-71 is expressed in normal breast tissue cells but not in breast cancer cells.</text>
</comment>
<comment type="domain">
    <text>The WW domain is required for the interaction with STIL and KIF20B.</text>
</comment>
<comment type="PTM">
    <text evidence="1 12">Phosphorylation at Ser-71 by DAPK1 results in inhibition of its catalytic activity, nuclear localization, and its ability to induce centrosome amplification, chromosome instability and cell transformation (PubMed:21497122). Ser-71 is dephosphorylated upon IL33-stimulation of dendritic cells (By similarity).</text>
</comment>
<keyword id="KW-0002">3D-structure</keyword>
<keyword id="KW-0007">Acetylation</keyword>
<keyword id="KW-0131">Cell cycle</keyword>
<keyword id="KW-0963">Cytoplasm</keyword>
<keyword id="KW-0413">Isomerase</keyword>
<keyword id="KW-0539">Nucleus</keyword>
<keyword id="KW-0597">Phosphoprotein</keyword>
<keyword id="KW-1267">Proteomics identification</keyword>
<keyword id="KW-1185">Reference proteome</keyword>
<keyword id="KW-0697">Rotamase</keyword>